<name>MYOME_HUMAN</name>
<dbReference type="EMBL" id="AB042555">
    <property type="protein sequence ID" value="BAB17759.1"/>
    <property type="molecule type" value="mRNA"/>
</dbReference>
<dbReference type="EMBL" id="AB042556">
    <property type="protein sequence ID" value="BAB17760.1"/>
    <property type="molecule type" value="mRNA"/>
</dbReference>
<dbReference type="EMBL" id="AB042557">
    <property type="protein sequence ID" value="BAB17761.1"/>
    <property type="molecule type" value="mRNA"/>
</dbReference>
<dbReference type="EMBL" id="AB042558">
    <property type="protein sequence ID" value="BAB17762.1"/>
    <property type="molecule type" value="mRNA"/>
</dbReference>
<dbReference type="EMBL" id="AB007923">
    <property type="protein sequence ID" value="BAA32299.2"/>
    <property type="status" value="ALT_INIT"/>
    <property type="molecule type" value="mRNA"/>
</dbReference>
<dbReference type="EMBL" id="AB007946">
    <property type="protein sequence ID" value="BAA32322.2"/>
    <property type="status" value="ALT_INIT"/>
    <property type="molecule type" value="mRNA"/>
</dbReference>
<dbReference type="EMBL" id="HQ333476">
    <property type="protein sequence ID" value="ADO32613.1"/>
    <property type="molecule type" value="mRNA"/>
</dbReference>
<dbReference type="EMBL" id="AL831815">
    <property type="protein sequence ID" value="CAD38529.1"/>
    <property type="molecule type" value="mRNA"/>
</dbReference>
<dbReference type="EMBL" id="AL832024">
    <property type="protein sequence ID" value="CAD89923.1"/>
    <property type="molecule type" value="mRNA"/>
</dbReference>
<dbReference type="EMBL" id="AL833273">
    <property type="protein sequence ID" value="CAD91152.1"/>
    <property type="status" value="ALT_FRAME"/>
    <property type="molecule type" value="mRNA"/>
</dbReference>
<dbReference type="EMBL" id="CR749273">
    <property type="protein sequence ID" value="CAH18128.1"/>
    <property type="status" value="ALT_SEQ"/>
    <property type="molecule type" value="mRNA"/>
</dbReference>
<dbReference type="EMBL" id="AL590452">
    <property type="protein sequence ID" value="CAH72521.1"/>
    <property type="molecule type" value="Genomic_DNA"/>
</dbReference>
<dbReference type="EMBL" id="AL138791">
    <property type="protein sequence ID" value="CAH72521.1"/>
    <property type="status" value="JOINED"/>
    <property type="molecule type" value="Genomic_DNA"/>
</dbReference>
<dbReference type="EMBL" id="AL590452">
    <property type="protein sequence ID" value="CAH72522.1"/>
    <property type="molecule type" value="Genomic_DNA"/>
</dbReference>
<dbReference type="EMBL" id="AL138796">
    <property type="protein sequence ID" value="CAH72522.1"/>
    <property type="status" value="JOINED"/>
    <property type="molecule type" value="Genomic_DNA"/>
</dbReference>
<dbReference type="EMBL" id="AL590452">
    <property type="protein sequence ID" value="CAH72523.1"/>
    <property type="molecule type" value="Genomic_DNA"/>
</dbReference>
<dbReference type="EMBL" id="AL138796">
    <property type="protein sequence ID" value="CAH72523.1"/>
    <property type="status" value="JOINED"/>
    <property type="molecule type" value="Genomic_DNA"/>
</dbReference>
<dbReference type="EMBL" id="AL590452">
    <property type="protein sequence ID" value="CAH72524.1"/>
    <property type="molecule type" value="Genomic_DNA"/>
</dbReference>
<dbReference type="EMBL" id="AL138796">
    <property type="protein sequence ID" value="CAH72524.1"/>
    <property type="status" value="JOINED"/>
    <property type="molecule type" value="Genomic_DNA"/>
</dbReference>
<dbReference type="EMBL" id="AL590452">
    <property type="protein sequence ID" value="CAH72525.1"/>
    <property type="molecule type" value="Genomic_DNA"/>
</dbReference>
<dbReference type="EMBL" id="AL590452">
    <property type="protein sequence ID" value="CAH72526.1"/>
    <property type="molecule type" value="Genomic_DNA"/>
</dbReference>
<dbReference type="EMBL" id="AL138796">
    <property type="protein sequence ID" value="CAH72526.1"/>
    <property type="status" value="JOINED"/>
    <property type="molecule type" value="Genomic_DNA"/>
</dbReference>
<dbReference type="EMBL" id="AL590452">
    <property type="protein sequence ID" value="CAH72527.1"/>
    <property type="molecule type" value="Genomic_DNA"/>
</dbReference>
<dbReference type="EMBL" id="AL138796">
    <property type="protein sequence ID" value="CAH72527.1"/>
    <property type="status" value="JOINED"/>
    <property type="molecule type" value="Genomic_DNA"/>
</dbReference>
<dbReference type="EMBL" id="AL590452">
    <property type="protein sequence ID" value="CAH72528.1"/>
    <property type="molecule type" value="Genomic_DNA"/>
</dbReference>
<dbReference type="EMBL" id="AL138796">
    <property type="protein sequence ID" value="CAH72528.1"/>
    <property type="status" value="JOINED"/>
    <property type="molecule type" value="Genomic_DNA"/>
</dbReference>
<dbReference type="EMBL" id="AL138791">
    <property type="protein sequence ID" value="CAI22527.1"/>
    <property type="molecule type" value="Genomic_DNA"/>
</dbReference>
<dbReference type="EMBL" id="AL590452">
    <property type="protein sequence ID" value="CAI22527.1"/>
    <property type="status" value="JOINED"/>
    <property type="molecule type" value="Genomic_DNA"/>
</dbReference>
<dbReference type="EMBL" id="AL138796">
    <property type="protein sequence ID" value="CAI22822.1"/>
    <property type="molecule type" value="Genomic_DNA"/>
</dbReference>
<dbReference type="EMBL" id="AL590452">
    <property type="protein sequence ID" value="CAI22822.1"/>
    <property type="status" value="JOINED"/>
    <property type="molecule type" value="Genomic_DNA"/>
</dbReference>
<dbReference type="EMBL" id="AL138796">
    <property type="protein sequence ID" value="CAI22823.1"/>
    <property type="molecule type" value="Genomic_DNA"/>
</dbReference>
<dbReference type="EMBL" id="AL590452">
    <property type="protein sequence ID" value="CAI22823.1"/>
    <property type="status" value="JOINED"/>
    <property type="molecule type" value="Genomic_DNA"/>
</dbReference>
<dbReference type="EMBL" id="AL138796">
    <property type="protein sequence ID" value="CAI22824.1"/>
    <property type="molecule type" value="Genomic_DNA"/>
</dbReference>
<dbReference type="EMBL" id="AL590452">
    <property type="protein sequence ID" value="CAI22824.1"/>
    <property type="status" value="JOINED"/>
    <property type="molecule type" value="Genomic_DNA"/>
</dbReference>
<dbReference type="EMBL" id="AL138796">
    <property type="protein sequence ID" value="CAI22825.1"/>
    <property type="molecule type" value="Genomic_DNA"/>
</dbReference>
<dbReference type="EMBL" id="AL590452">
    <property type="protein sequence ID" value="CAI22825.1"/>
    <property type="status" value="JOINED"/>
    <property type="molecule type" value="Genomic_DNA"/>
</dbReference>
<dbReference type="EMBL" id="AL138796">
    <property type="protein sequence ID" value="CAI22826.1"/>
    <property type="molecule type" value="Genomic_DNA"/>
</dbReference>
<dbReference type="EMBL" id="AL590452">
    <property type="protein sequence ID" value="CAI22826.1"/>
    <property type="status" value="JOINED"/>
    <property type="molecule type" value="Genomic_DNA"/>
</dbReference>
<dbReference type="EMBL" id="AL138796">
    <property type="protein sequence ID" value="CAI22827.1"/>
    <property type="molecule type" value="Genomic_DNA"/>
</dbReference>
<dbReference type="EMBL" id="AL590452">
    <property type="protein sequence ID" value="CAI22827.1"/>
    <property type="status" value="JOINED"/>
    <property type="molecule type" value="Genomic_DNA"/>
</dbReference>
<dbReference type="EMBL" id="AC239802">
    <property type="status" value="NOT_ANNOTATED_CDS"/>
    <property type="molecule type" value="Genomic_DNA"/>
</dbReference>
<dbReference type="EMBL" id="AC245389">
    <property type="status" value="NOT_ANNOTATED_CDS"/>
    <property type="molecule type" value="Genomic_DNA"/>
</dbReference>
<dbReference type="EMBL" id="AC239804">
    <property type="status" value="NOT_ANNOTATED_CDS"/>
    <property type="molecule type" value="Genomic_DNA"/>
</dbReference>
<dbReference type="EMBL" id="BC004860">
    <property type="protein sequence ID" value="AAH04860.1"/>
    <property type="status" value="ALT_SEQ"/>
    <property type="molecule type" value="mRNA"/>
</dbReference>
<dbReference type="EMBL" id="BC025406">
    <property type="protein sequence ID" value="AAH25406.1"/>
    <property type="molecule type" value="mRNA"/>
</dbReference>
<dbReference type="EMBL" id="BC078660">
    <property type="protein sequence ID" value="AAH78660.1"/>
    <property type="molecule type" value="mRNA"/>
</dbReference>
<dbReference type="EMBL" id="BC110294">
    <property type="protein sequence ID" value="AAI10295.1"/>
    <property type="molecule type" value="mRNA"/>
</dbReference>
<dbReference type="EMBL" id="BC132717">
    <property type="protein sequence ID" value="AAI32718.1"/>
    <property type="molecule type" value="mRNA"/>
</dbReference>
<dbReference type="EMBL" id="BC152439">
    <property type="protein sequence ID" value="AAI52440.1"/>
    <property type="molecule type" value="mRNA"/>
</dbReference>
<dbReference type="EMBL" id="DA900724">
    <property type="status" value="NOT_ANNOTATED_CDS"/>
    <property type="molecule type" value="mRNA"/>
</dbReference>
<dbReference type="CCDS" id="CCDS72887.1">
    <molecule id="Q5VU43-8"/>
</dbReference>
<dbReference type="CCDS" id="CCDS72888.1">
    <molecule id="Q5VU43-3"/>
</dbReference>
<dbReference type="CCDS" id="CCDS72890.1">
    <molecule id="Q5VU43-6"/>
</dbReference>
<dbReference type="CCDS" id="CCDS72891.1">
    <molecule id="Q5VU43-1"/>
</dbReference>
<dbReference type="CCDS" id="CCDS72892.1">
    <molecule id="Q5VU43-4"/>
</dbReference>
<dbReference type="CCDS" id="CCDS72893.1">
    <molecule id="Q5VU43-11"/>
</dbReference>
<dbReference type="CCDS" id="CCDS72894.1">
    <molecule id="Q5VU43-2"/>
</dbReference>
<dbReference type="CCDS" id="CCDS91045.1">
    <molecule id="Q5VU43-13"/>
</dbReference>
<dbReference type="PIR" id="T00069">
    <property type="entry name" value="T00069"/>
</dbReference>
<dbReference type="PIR" id="T00259">
    <property type="entry name" value="T00259"/>
</dbReference>
<dbReference type="RefSeq" id="NP_001002810.1">
    <molecule id="Q5VU43-11"/>
    <property type="nucleotide sequence ID" value="NM_001002810.5"/>
</dbReference>
<dbReference type="RefSeq" id="NP_001002811.2">
    <molecule id="Q5VU43-2"/>
    <property type="nucleotide sequence ID" value="NM_001002811.3"/>
</dbReference>
<dbReference type="RefSeq" id="NP_001002812.2">
    <molecule id="Q5VU43-6"/>
    <property type="nucleotide sequence ID" value="NM_001002812.4"/>
</dbReference>
<dbReference type="RefSeq" id="NP_001182189.1">
    <property type="nucleotide sequence ID" value="NM_001195260.1"/>
</dbReference>
<dbReference type="RefSeq" id="NP_001182190.1">
    <property type="nucleotide sequence ID" value="NM_001195261.1"/>
</dbReference>
<dbReference type="RefSeq" id="NP_001185761.2">
    <molecule id="Q5VU43-3"/>
    <property type="nucleotide sequence ID" value="NM_001198832.4"/>
</dbReference>
<dbReference type="RefSeq" id="NP_001185763.3">
    <molecule id="Q5VU43-4"/>
    <property type="nucleotide sequence ID" value="NM_001198834.5"/>
</dbReference>
<dbReference type="RefSeq" id="NP_001382244.1">
    <molecule id="Q5VU43-13"/>
    <property type="nucleotide sequence ID" value="NM_001395315.1"/>
</dbReference>
<dbReference type="RefSeq" id="NP_055459.5">
    <molecule id="Q5VU43-1"/>
    <property type="nucleotide sequence ID" value="NM_014644.5"/>
</dbReference>
<dbReference type="RefSeq" id="NP_071754.3">
    <molecule id="Q5VU43-8"/>
    <property type="nucleotide sequence ID" value="NM_022359.5"/>
</dbReference>
<dbReference type="RefSeq" id="XP_016855361.1">
    <property type="nucleotide sequence ID" value="XM_016999872.1"/>
</dbReference>
<dbReference type="RefSeq" id="XP_016855362.1">
    <property type="nucleotide sequence ID" value="XM_016999873.1"/>
</dbReference>
<dbReference type="RefSeq" id="XP_016858514.1">
    <property type="nucleotide sequence ID" value="XM_017003025.1"/>
</dbReference>
<dbReference type="RefSeq" id="XP_016858515.1">
    <property type="nucleotide sequence ID" value="XM_017003026.1"/>
</dbReference>
<dbReference type="SMR" id="Q5VU43"/>
<dbReference type="BioGRID" id="115017">
    <property type="interactions" value="208"/>
</dbReference>
<dbReference type="CORUM" id="Q5VU43"/>
<dbReference type="DIP" id="DIP-51263N"/>
<dbReference type="FunCoup" id="Q5VU43">
    <property type="interactions" value="1249"/>
</dbReference>
<dbReference type="IntAct" id="Q5VU43">
    <property type="interactions" value="209"/>
</dbReference>
<dbReference type="MINT" id="Q5VU43"/>
<dbReference type="STRING" id="9606.ENSP00000358363"/>
<dbReference type="GlyCosmos" id="Q5VU43">
    <property type="glycosylation" value="2 sites, 1 glycan"/>
</dbReference>
<dbReference type="GlyGen" id="Q5VU43">
    <property type="glycosylation" value="7 sites, 1 N-linked glycan (1 site), 2 O-linked glycans (5 sites)"/>
</dbReference>
<dbReference type="iPTMnet" id="Q5VU43"/>
<dbReference type="PhosphoSitePlus" id="Q5VU43"/>
<dbReference type="BioMuta" id="PDE4DIP"/>
<dbReference type="DMDM" id="74747041"/>
<dbReference type="jPOST" id="Q5VU43"/>
<dbReference type="MassIVE" id="Q5VU43"/>
<dbReference type="PaxDb" id="9606-ENSP00000358363"/>
<dbReference type="PeptideAtlas" id="Q5VU43"/>
<dbReference type="ProteomicsDB" id="21657"/>
<dbReference type="ProteomicsDB" id="65374">
    <molecule id="Q5VU43-1"/>
</dbReference>
<dbReference type="ProteomicsDB" id="65375">
    <molecule id="Q5VU43-10"/>
</dbReference>
<dbReference type="ProteomicsDB" id="65376">
    <molecule id="Q5VU43-11"/>
</dbReference>
<dbReference type="ProteomicsDB" id="65377">
    <molecule id="Q5VU43-12"/>
</dbReference>
<dbReference type="ProteomicsDB" id="65378">
    <molecule id="Q5VU43-2"/>
</dbReference>
<dbReference type="ProteomicsDB" id="65379">
    <molecule id="Q5VU43-3"/>
</dbReference>
<dbReference type="ProteomicsDB" id="65380">
    <molecule id="Q5VU43-4"/>
</dbReference>
<dbReference type="ProteomicsDB" id="65381">
    <molecule id="Q5VU43-6"/>
</dbReference>
<dbReference type="ProteomicsDB" id="65382">
    <molecule id="Q5VU43-7"/>
</dbReference>
<dbReference type="ProteomicsDB" id="65383">
    <molecule id="Q5VU43-8"/>
</dbReference>
<dbReference type="ProteomicsDB" id="65384">
    <molecule id="Q5VU43-9"/>
</dbReference>
<dbReference type="Pumba" id="Q5VU43"/>
<dbReference type="Antibodypedia" id="2152">
    <property type="antibodies" value="129 antibodies from 24 providers"/>
</dbReference>
<dbReference type="DNASU" id="9659"/>
<dbReference type="Ensembl" id="ENST00000313431.13">
    <molecule id="Q5VU43-2"/>
    <property type="protein sequence ID" value="ENSP00000316434.9"/>
    <property type="gene ID" value="ENSG00000178104.22"/>
</dbReference>
<dbReference type="Ensembl" id="ENST00000369347.8">
    <molecule id="Q5VU43-11"/>
    <property type="protein sequence ID" value="ENSP00000358353.4"/>
    <property type="gene ID" value="ENSG00000178104.22"/>
</dbReference>
<dbReference type="Ensembl" id="ENST00000369349.7">
    <molecule id="Q5VU43-6"/>
    <property type="protein sequence ID" value="ENSP00000358355.3"/>
    <property type="gene ID" value="ENSG00000178104.22"/>
</dbReference>
<dbReference type="Ensembl" id="ENST00000369351.7">
    <molecule id="Q5VU43-7"/>
    <property type="protein sequence ID" value="ENSP00000358357.3"/>
    <property type="gene ID" value="ENSG00000178104.22"/>
</dbReference>
<dbReference type="Ensembl" id="ENST00000369354.7">
    <molecule id="Q5VU43-1"/>
    <property type="protein sequence ID" value="ENSP00000358360.3"/>
    <property type="gene ID" value="ENSG00000178104.22"/>
</dbReference>
<dbReference type="Ensembl" id="ENST00000369356.8">
    <molecule id="Q5VU43-4"/>
    <property type="protein sequence ID" value="ENSP00000358363.4"/>
    <property type="gene ID" value="ENSG00000178104.22"/>
</dbReference>
<dbReference type="Ensembl" id="ENST00000529945.2">
    <molecule id="Q5VU43-13"/>
    <property type="protein sequence ID" value="ENSP00000433392.1"/>
    <property type="gene ID" value="ENSG00000178104.22"/>
</dbReference>
<dbReference type="Ensembl" id="ENST00000530472.5">
    <molecule id="Q5VU43-8"/>
    <property type="protein sequence ID" value="ENSP00000482121.1"/>
    <property type="gene ID" value="ENSG00000178104.22"/>
</dbReference>
<dbReference type="Ensembl" id="ENST00000618462.4">
    <molecule id="Q5VU43-3"/>
    <property type="protein sequence ID" value="ENSP00000479409.1"/>
    <property type="gene ID" value="ENSG00000178104.22"/>
</dbReference>
<dbReference type="GeneID" id="9659"/>
<dbReference type="KEGG" id="hsa:9659"/>
<dbReference type="UCSC" id="uc001emb.3">
    <molecule id="Q5VU43-1"/>
    <property type="organism name" value="human"/>
</dbReference>
<dbReference type="UCSC" id="uc057kja.1">
    <property type="organism name" value="human"/>
</dbReference>
<dbReference type="AGR" id="HGNC:15580"/>
<dbReference type="CTD" id="9659"/>
<dbReference type="DisGeNET" id="9659"/>
<dbReference type="GeneCards" id="PDE4DIP"/>
<dbReference type="HGNC" id="HGNC:15580">
    <property type="gene designation" value="PDE4DIP"/>
</dbReference>
<dbReference type="HPA" id="ENSG00000178104">
    <property type="expression patterns" value="Group enriched (heart muscle, skeletal muscle, tongue)"/>
</dbReference>
<dbReference type="MIM" id="608117">
    <property type="type" value="gene"/>
</dbReference>
<dbReference type="neXtProt" id="NX_Q5VU43"/>
<dbReference type="OpenTargets" id="ENSG00000178104"/>
<dbReference type="PharmGKB" id="PA33131"/>
<dbReference type="VEuPathDB" id="HostDB:ENSG00000178104"/>
<dbReference type="eggNOG" id="ENOG502QPV2">
    <property type="taxonomic scope" value="Eukaryota"/>
</dbReference>
<dbReference type="GeneTree" id="ENSGT00950000183190"/>
<dbReference type="HOGENOM" id="CLU_897036_0_0_1"/>
<dbReference type="InParanoid" id="Q5VU43"/>
<dbReference type="OMA" id="SEMEEQW"/>
<dbReference type="OrthoDB" id="10255000at2759"/>
<dbReference type="PAN-GO" id="Q5VU43">
    <property type="GO annotations" value="6 GO annotations based on evolutionary models"/>
</dbReference>
<dbReference type="PhylomeDB" id="Q5VU43"/>
<dbReference type="TreeFam" id="TF329233"/>
<dbReference type="PathwayCommons" id="Q5VU43"/>
<dbReference type="SignaLink" id="Q5VU43"/>
<dbReference type="SIGNOR" id="Q5VU43"/>
<dbReference type="BioGRID-ORCS" id="653513">
    <property type="hits" value="0 hits in 3 CRISPR screens"/>
</dbReference>
<dbReference type="BioGRID-ORCS" id="9659">
    <property type="hits" value="367 hits in 1161 CRISPR screens"/>
</dbReference>
<dbReference type="CD-CODE" id="8C2F96ED">
    <property type="entry name" value="Centrosome"/>
</dbReference>
<dbReference type="ChiTaRS" id="PDE4DIP">
    <property type="organism name" value="human"/>
</dbReference>
<dbReference type="GeneWiki" id="Myomegalin"/>
<dbReference type="GenomeRNAi" id="9659"/>
<dbReference type="Pharos" id="Q5VU43">
    <property type="development level" value="Tbio"/>
</dbReference>
<dbReference type="PRO" id="PR:Q5VU43"/>
<dbReference type="Proteomes" id="UP000005640">
    <property type="component" value="Chromosome 1"/>
</dbReference>
<dbReference type="RNAct" id="Q5VU43">
    <property type="molecule type" value="protein"/>
</dbReference>
<dbReference type="Bgee" id="ENSG00000178104">
    <property type="expression patterns" value="Expressed in apex of heart and 198 other cell types or tissues"/>
</dbReference>
<dbReference type="ExpressionAtlas" id="Q5VU43">
    <property type="expression patterns" value="baseline and differential"/>
</dbReference>
<dbReference type="GO" id="GO:0005813">
    <property type="term" value="C:centrosome"/>
    <property type="evidence" value="ECO:0000314"/>
    <property type="project" value="UniProtKB"/>
</dbReference>
<dbReference type="GO" id="GO:0005737">
    <property type="term" value="C:cytoplasm"/>
    <property type="evidence" value="ECO:0000314"/>
    <property type="project" value="UniProtKB"/>
</dbReference>
<dbReference type="GO" id="GO:0005794">
    <property type="term" value="C:Golgi apparatus"/>
    <property type="evidence" value="ECO:0000314"/>
    <property type="project" value="UniProtKB"/>
</dbReference>
<dbReference type="GO" id="GO:0030016">
    <property type="term" value="C:myofibril"/>
    <property type="evidence" value="ECO:0000250"/>
    <property type="project" value="UniProtKB"/>
</dbReference>
<dbReference type="GO" id="GO:0005634">
    <property type="term" value="C:nucleus"/>
    <property type="evidence" value="ECO:0000314"/>
    <property type="project" value="UniProtKB"/>
</dbReference>
<dbReference type="GO" id="GO:0019899">
    <property type="term" value="F:enzyme binding"/>
    <property type="evidence" value="ECO:0000250"/>
    <property type="project" value="UniProtKB"/>
</dbReference>
<dbReference type="GO" id="GO:0060090">
    <property type="term" value="F:molecular adaptor activity"/>
    <property type="evidence" value="ECO:0000314"/>
    <property type="project" value="UniProtKB"/>
</dbReference>
<dbReference type="GO" id="GO:0030953">
    <property type="term" value="P:astral microtubule organization"/>
    <property type="evidence" value="ECO:0000315"/>
    <property type="project" value="UniProtKB"/>
</dbReference>
<dbReference type="GO" id="GO:0007098">
    <property type="term" value="P:centrosome cycle"/>
    <property type="evidence" value="ECO:0000318"/>
    <property type="project" value="GO_Central"/>
</dbReference>
<dbReference type="GO" id="GO:0090063">
    <property type="term" value="P:positive regulation of microtubule nucleation"/>
    <property type="evidence" value="ECO:0000315"/>
    <property type="project" value="UniProtKB"/>
</dbReference>
<dbReference type="GO" id="GO:0065003">
    <property type="term" value="P:protein-containing complex assembly"/>
    <property type="evidence" value="ECO:0000250"/>
    <property type="project" value="UniProtKB"/>
</dbReference>
<dbReference type="GO" id="GO:1903358">
    <property type="term" value="P:regulation of Golgi organization"/>
    <property type="evidence" value="ECO:0000314"/>
    <property type="project" value="UniProtKB"/>
</dbReference>
<dbReference type="InterPro" id="IPR056273">
    <property type="entry name" value="CC_CDK5RAP2_MYOME"/>
</dbReference>
<dbReference type="InterPro" id="IPR012943">
    <property type="entry name" value="Cnn_1N"/>
</dbReference>
<dbReference type="InterPro" id="IPR052593">
    <property type="entry name" value="MT-associated_AKAP9-binding"/>
</dbReference>
<dbReference type="InterPro" id="IPR010630">
    <property type="entry name" value="Olduvai_dom"/>
</dbReference>
<dbReference type="PANTHER" id="PTHR46501">
    <property type="entry name" value="MYOMEGALIN"/>
    <property type="match status" value="1"/>
</dbReference>
<dbReference type="PANTHER" id="PTHR46501:SF2">
    <property type="entry name" value="MYOMEGALIN"/>
    <property type="match status" value="1"/>
</dbReference>
<dbReference type="Pfam" id="PF23246">
    <property type="entry name" value="CC_CDK5RAP2"/>
    <property type="match status" value="1"/>
</dbReference>
<dbReference type="Pfam" id="PF07989">
    <property type="entry name" value="Cnn_1N"/>
    <property type="match status" value="1"/>
</dbReference>
<dbReference type="Pfam" id="PF06758">
    <property type="entry name" value="Olduvai"/>
    <property type="match status" value="1"/>
</dbReference>
<dbReference type="SMART" id="SM01148">
    <property type="entry name" value="DUF1220"/>
    <property type="match status" value="1"/>
</dbReference>
<dbReference type="PROSITE" id="PS51316">
    <property type="entry name" value="ODV"/>
    <property type="match status" value="1"/>
</dbReference>
<comment type="function">
    <text evidence="1">Functions as an anchor sequestering components of the cAMP-dependent pathway to Golgi and/or centrosomes (By similarity).</text>
</comment>
<comment type="function">
    <molecule>Isoform 13</molecule>
    <text evidence="10 11 12 13">Participates in microtubule dynamics, promoting microtubule assembly. Depending upon the cell context, may act at the level of the Golgi apparatus or that of the centrosome (PubMed:25217626, PubMed:27666745, PubMed:28814570, PubMed:29162697). In complex with AKAP9, recruits CAMSAP2 to the Golgi apparatus and tethers non-centrosomal minus-end microtubules to the Golgi, an important step for polarized cell movement (PubMed:27666745, PubMed:28814570). In complex with AKAP9, EB1/MAPRE1 and CDK5RAP2, contributes to microtubules nucleation and extension from the centrosome to the cell periphery, a crucial process for directed cell migration, mitotic spindle orientation and cell-cycle progression (PubMed:29162697).</text>
</comment>
<comment type="subunit">
    <text evidence="1 10 11 12 13">Interacts with PDE4D (By similarity). Isoform 13 interacts with MAPRE1 and MAPRE3 (PubMed:25217626, PubMed:28814570, PubMed:29162697). Isoform 13 forms a pericentrosomal complex with AKAP9, CDK5RAP2 and EB1/MAPRE1; within this complex, may mediate MAPRE1-binding to CDK5RAP2 (PubMed:29162697). Interaction of isoform 13 with AKAP9 stabilizes both proteins (PubMed:25217626, PubMed:27666745). Isoform 13 interacts (via N-terminus) with CAMSAP2; this interaction is much stronger in the presence of AKAP9 (PubMed:27666745). In complex with AKAP9, Isoform 13 recruits CAMSAP2 to the Golgi apparatus (PubMed:27666745, PubMed:28814570). Isoform 13 interacts with unglycosylated LGALS3BP; this interaction may connect the pericentrosomal complex to the gamma-tubulin ring complex (gamma-TuRC) to promote microtubule assembly and acetylation (PubMed:25217626, PubMed:29162697).</text>
</comment>
<comment type="interaction">
    <interactant intactId="EBI-1105124">
        <id>Q5VU43</id>
    </interactant>
    <interactant intactId="EBI-8637627">
        <id>Q8WTP8</id>
        <label>AEN</label>
    </interactant>
    <organismsDiffer>false</organismsDiffer>
    <experiments>3</experiments>
</comment>
<comment type="interaction">
    <interactant intactId="EBI-1105124">
        <id>Q5VU43</id>
    </interactant>
    <interactant intactId="EBI-8643161">
        <id>Q9NX04</id>
        <label>AIRIM</label>
    </interactant>
    <organismsDiffer>false</organismsDiffer>
    <experiments>3</experiments>
</comment>
<comment type="interaction">
    <interactant intactId="EBI-1105124">
        <id>Q5VU43</id>
    </interactant>
    <interactant intactId="EBI-358049">
        <id>Q13895</id>
        <label>BYSL</label>
    </interactant>
    <organismsDiffer>false</organismsDiffer>
    <experiments>5</experiments>
</comment>
<comment type="interaction">
    <interactant intactId="EBI-1105124">
        <id>Q5VU43</id>
    </interactant>
    <interactant intactId="EBI-10238351">
        <id>Q9NVL8</id>
        <label>CCDC198</label>
    </interactant>
    <organismsDiffer>false</organismsDiffer>
    <experiments>3</experiments>
</comment>
<comment type="interaction">
    <interactant intactId="EBI-1105124">
        <id>Q5VU43</id>
    </interactant>
    <interactant intactId="EBI-743375">
        <id>Q9NX63</id>
        <label>CHCHD3</label>
    </interactant>
    <organismsDiffer>false</organismsDiffer>
    <experiments>3</experiments>
</comment>
<comment type="interaction">
    <interactant intactId="EBI-1105124">
        <id>Q5VU43</id>
    </interactant>
    <interactant intactId="EBI-529989">
        <id>Q9NRI5</id>
        <label>DISC1</label>
    </interactant>
    <organismsDiffer>false</organismsDiffer>
    <experiments>3</experiments>
</comment>
<comment type="interaction">
    <interactant intactId="EBI-1105124">
        <id>Q5VU43</id>
    </interactant>
    <interactant intactId="EBI-719941">
        <id>Q3B820</id>
        <label>FAM161A</label>
    </interactant>
    <organismsDiffer>false</organismsDiffer>
    <experiments>3</experiments>
</comment>
<comment type="interaction">
    <interactant intactId="EBI-1105124">
        <id>Q5VU43</id>
    </interactant>
    <interactant intactId="EBI-10181276">
        <id>Q0D2H9</id>
        <label>GOLGA8DP</label>
    </interactant>
    <organismsDiffer>false</organismsDiffer>
    <experiments>3</experiments>
</comment>
<comment type="interaction">
    <interactant intactId="EBI-1105124">
        <id>Q5VU43</id>
    </interactant>
    <interactant intactId="EBI-10181260">
        <id>Q08AF8</id>
        <label>GOLGA8G</label>
    </interactant>
    <organismsDiffer>false</organismsDiffer>
    <experiments>3</experiments>
</comment>
<comment type="interaction">
    <interactant intactId="EBI-1105124">
        <id>Q5VU43</id>
    </interactant>
    <interactant intactId="EBI-2514791">
        <id>Q96CS2</id>
        <label>HAUS1</label>
    </interactant>
    <organismsDiffer>false</organismsDiffer>
    <experiments>3</experiments>
</comment>
<comment type="interaction">
    <interactant intactId="EBI-1105124">
        <id>Q5VU43</id>
    </interactant>
    <interactant intactId="EBI-473801">
        <id>Q16891</id>
        <label>IMMT</label>
    </interactant>
    <organismsDiffer>false</organismsDiffer>
    <experiments>2</experiments>
</comment>
<comment type="interaction">
    <interactant intactId="EBI-1105124">
        <id>Q5VU43</id>
    </interactant>
    <interactant intactId="EBI-1643885">
        <id>Q6P597</id>
        <label>KLC3</label>
    </interactant>
    <organismsDiffer>false</organismsDiffer>
    <experiments>3</experiments>
</comment>
<comment type="interaction">
    <interactant intactId="EBI-1105124">
        <id>Q5VU43</id>
    </interactant>
    <interactant intactId="EBI-726510">
        <id>Q96BZ8</id>
        <label>LENG1</label>
    </interactant>
    <organismsDiffer>false</organismsDiffer>
    <experiments>3</experiments>
</comment>
<comment type="interaction">
    <interactant intactId="EBI-1105124">
        <id>Q5VU43</id>
    </interactant>
    <interactant intactId="EBI-2798728">
        <id>P61968</id>
        <label>LMO4</label>
    </interactant>
    <organismsDiffer>false</organismsDiffer>
    <experiments>4</experiments>
</comment>
<comment type="interaction">
    <interactant intactId="EBI-1105124">
        <id>Q5VU43</id>
    </interactant>
    <interactant intactId="EBI-1004115">
        <id>Q15691</id>
        <label>MAPRE1</label>
    </interactant>
    <organismsDiffer>false</organismsDiffer>
    <experiments>6</experiments>
</comment>
<comment type="interaction">
    <interactant intactId="EBI-1105124">
        <id>Q5VU43</id>
    </interactant>
    <interactant intactId="EBI-373498">
        <id>A9UHW6</id>
        <label>MIF4GD</label>
    </interactant>
    <organismsDiffer>false</organismsDiffer>
    <experiments>3</experiments>
</comment>
<comment type="interaction">
    <interactant intactId="EBI-1105124">
        <id>Q5VU43</id>
    </interactant>
    <interactant intactId="EBI-742948">
        <id>Q5JR59</id>
        <label>MTUS2</label>
    </interactant>
    <organismsDiffer>false</organismsDiffer>
    <experiments>3</experiments>
</comment>
<comment type="interaction">
    <interactant intactId="EBI-1105124">
        <id>Q5VU43</id>
    </interactant>
    <interactant intactId="EBI-747693">
        <id>P41227</id>
        <label>NAA10</label>
    </interactant>
    <organismsDiffer>false</organismsDiffer>
    <experiments>4</experiments>
</comment>
<comment type="interaction">
    <interactant intactId="EBI-1105124">
        <id>Q5VU43</id>
    </interactant>
    <interactant intactId="EBI-2557469">
        <id>Q6NYC8</id>
        <label>PPP1R18</label>
    </interactant>
    <organismsDiffer>false</organismsDiffer>
    <experiments>3</experiments>
</comment>
<comment type="interaction">
    <interactant intactId="EBI-1105124">
        <id>Q5VU43</id>
    </interactant>
    <interactant intactId="EBI-1567797">
        <id>Q8WWY3</id>
        <label>PRPF31</label>
    </interactant>
    <organismsDiffer>false</organismsDiffer>
    <experiments>7</experiments>
</comment>
<comment type="interaction">
    <interactant intactId="EBI-1105124">
        <id>Q5VU43</id>
    </interactant>
    <interactant intactId="EBI-10217913">
        <id>Q14D33</id>
        <label>RTP5</label>
    </interactant>
    <organismsDiffer>false</organismsDiffer>
    <experiments>3</experiments>
</comment>
<comment type="interaction">
    <interactant intactId="EBI-1105124">
        <id>Q5VU43</id>
    </interactant>
    <interactant intactId="EBI-748391">
        <id>Q9BWG6</id>
        <label>SCNM1</label>
    </interactant>
    <organismsDiffer>false</organismsDiffer>
    <experiments>3</experiments>
</comment>
<comment type="interaction">
    <interactant intactId="EBI-1105124">
        <id>Q5VU43</id>
    </interactant>
    <interactant intactId="EBI-727004">
        <id>O00560</id>
        <label>SDCBP</label>
    </interactant>
    <organismsDiffer>false</organismsDiffer>
    <experiments>4</experiments>
</comment>
<comment type="interaction">
    <interactant intactId="EBI-1105124">
        <id>Q5VU43</id>
    </interactant>
    <interactant intactId="EBI-747035">
        <id>Q9H788</id>
        <label>SH2D4A</label>
    </interactant>
    <organismsDiffer>false</organismsDiffer>
    <experiments>3</experiments>
</comment>
<comment type="interaction">
    <interactant intactId="EBI-1105124">
        <id>Q5VU43</id>
    </interactant>
    <interactant intactId="EBI-10308083">
        <id>Q9H788-2</id>
        <label>SH2D4A</label>
    </interactant>
    <organismsDiffer>false</organismsDiffer>
    <experiments>3</experiments>
</comment>
<comment type="interaction">
    <interactant intactId="EBI-1105124">
        <id>Q5VU43</id>
    </interactant>
    <interactant intactId="EBI-10313866">
        <id>Q9NUL5</id>
        <label>SHFL</label>
    </interactant>
    <organismsDiffer>false</organismsDiffer>
    <experiments>3</experiments>
</comment>
<comment type="interaction">
    <interactant intactId="EBI-1105124">
        <id>Q5VU43</id>
    </interactant>
    <interactant intactId="EBI-10225961">
        <id>Q08E77</id>
        <label>UTP14C</label>
    </interactant>
    <organismsDiffer>false</organismsDiffer>
    <experiments>3</experiments>
</comment>
<comment type="interaction">
    <interactant intactId="EBI-1105124">
        <id>Q5VU43</id>
    </interactant>
    <interactant intactId="EBI-2849569">
        <id>Q9BQ24</id>
        <label>ZFYVE21</label>
    </interactant>
    <organismsDiffer>false</organismsDiffer>
    <experiments>3</experiments>
</comment>
<comment type="interaction">
    <interactant intactId="EBI-1105124">
        <id>Q5VU43</id>
    </interactant>
    <interactant intactId="EBI-347633">
        <id>Q9H9D4</id>
        <label>ZNF408</label>
    </interactant>
    <organismsDiffer>false</organismsDiffer>
    <experiments>3</experiments>
</comment>
<comment type="interaction">
    <interactant intactId="EBI-1105124">
        <id>Q5VU43</id>
    </interactant>
    <interactant intactId="EBI-745520">
        <id>Q9P0T4</id>
        <label>ZNF581</label>
    </interactant>
    <organismsDiffer>false</organismsDiffer>
    <experiments>3</experiments>
</comment>
<comment type="interaction">
    <interactant intactId="EBI-1105124">
        <id>Q5VU43</id>
    </interactant>
    <interactant intactId="EBI-3920053">
        <id>Q16670</id>
        <label>ZSCAN26</label>
    </interactant>
    <organismsDiffer>false</organismsDiffer>
    <experiments>3</experiments>
</comment>
<comment type="interaction">
    <interactant intactId="EBI-1105124">
        <id>Q5VU43</id>
    </interactant>
    <interactant intactId="EBI-10307481">
        <id>Q9H6F0</id>
    </interactant>
    <organismsDiffer>false</organismsDiffer>
    <experiments>3</experiments>
</comment>
<comment type="interaction">
    <interactant intactId="EBI-1105124">
        <id>Q5VU43</id>
    </interactant>
    <interactant intactId="EBI-25475888">
        <id>PRO_0000449630</id>
        <label>rep</label>
        <dbReference type="UniProtKB" id="P0DTD1"/>
    </interactant>
    <organismsDiffer>true</organismsDiffer>
    <experiments>3</experiments>
</comment>
<comment type="interaction">
    <interactant intactId="EBI-9640281">
        <id>Q5VU43-2</id>
    </interactant>
    <interactant intactId="EBI-8643161">
        <id>Q9NX04</id>
        <label>AIRIM</label>
    </interactant>
    <organismsDiffer>false</organismsDiffer>
    <experiments>3</experiments>
</comment>
<comment type="interaction">
    <interactant intactId="EBI-9640281">
        <id>Q5VU43-2</id>
    </interactant>
    <interactant intactId="EBI-2825900">
        <id>Q92619</id>
        <label>ARHGAP45</label>
    </interactant>
    <organismsDiffer>false</organismsDiffer>
    <experiments>3</experiments>
</comment>
<comment type="interaction">
    <interactant intactId="EBI-9640281">
        <id>Q5VU43-2</id>
    </interactant>
    <interactant intactId="EBI-358049">
        <id>Q13895</id>
        <label>BYSL</label>
    </interactant>
    <organismsDiffer>false</organismsDiffer>
    <experiments>3</experiments>
</comment>
<comment type="interaction">
    <interactant intactId="EBI-9640281">
        <id>Q5VU43-2</id>
    </interactant>
    <interactant intactId="EBI-10749669">
        <id>Q8IYE0</id>
        <label>CCDC146</label>
    </interactant>
    <organismsDiffer>false</organismsDiffer>
    <experiments>3</experiments>
</comment>
<comment type="interaction">
    <interactant intactId="EBI-9640281">
        <id>Q5VU43-2</id>
    </interactant>
    <interactant intactId="EBI-11748295">
        <id>E9PSE9</id>
        <label>CCDC198</label>
    </interactant>
    <organismsDiffer>false</organismsDiffer>
    <experiments>3</experiments>
</comment>
<comment type="interaction">
    <interactant intactId="EBI-9640281">
        <id>Q5VU43-2</id>
    </interactant>
    <interactant intactId="EBI-5453285">
        <id>Q2TBE0</id>
        <label>CWF19L2</label>
    </interactant>
    <organismsDiffer>false</organismsDiffer>
    <experiments>3</experiments>
</comment>
<comment type="interaction">
    <interactant intactId="EBI-9640281">
        <id>Q5VU43-2</id>
    </interactant>
    <interactant intactId="EBI-16431598">
        <id>A0A0S2Z3U4</id>
        <label>EGR2</label>
    </interactant>
    <organismsDiffer>false</organismsDiffer>
    <experiments>3</experiments>
</comment>
<comment type="interaction">
    <interactant intactId="EBI-9640281">
        <id>Q5VU43-2</id>
    </interactant>
    <interactant intactId="EBI-742802">
        <id>Q9Y247</id>
        <label>FAM50B</label>
    </interactant>
    <organismsDiffer>false</organismsDiffer>
    <experiments>3</experiments>
</comment>
<comment type="interaction">
    <interactant intactId="EBI-9640281">
        <id>Q5VU43-2</id>
    </interactant>
    <interactant intactId="EBI-3893317">
        <id>P09067</id>
        <label>HOXB5</label>
    </interactant>
    <organismsDiffer>false</organismsDiffer>
    <experiments>3</experiments>
</comment>
<comment type="interaction">
    <interactant intactId="EBI-9640281">
        <id>Q5VU43-2</id>
    </interactant>
    <interactant intactId="EBI-1752118">
        <id>P31273</id>
        <label>HOXC8</label>
    </interactant>
    <organismsDiffer>false</organismsDiffer>
    <experiments>3</experiments>
</comment>
<comment type="interaction">
    <interactant intactId="EBI-9640281">
        <id>Q5VU43-2</id>
    </interactant>
    <interactant intactId="EBI-748884">
        <id>Q96GY3</id>
        <label>LIN37</label>
    </interactant>
    <organismsDiffer>false</organismsDiffer>
    <experiments>3</experiments>
</comment>
<comment type="interaction">
    <interactant intactId="EBI-9640281">
        <id>Q5VU43-2</id>
    </interactant>
    <interactant intactId="EBI-726739">
        <id>Q9UPY8</id>
        <label>MAPRE3</label>
    </interactant>
    <organismsDiffer>false</organismsDiffer>
    <experiments>3</experiments>
</comment>
<comment type="interaction">
    <interactant intactId="EBI-9640281">
        <id>Q5VU43-2</id>
    </interactant>
    <interactant intactId="EBI-12010196">
        <id>P52179-2</id>
        <label>MYOM1</label>
    </interactant>
    <organismsDiffer>false</organismsDiffer>
    <experiments>3</experiments>
</comment>
<comment type="interaction">
    <interactant intactId="EBI-9640281">
        <id>Q5VU43-2</id>
    </interactant>
    <interactant intactId="EBI-747693">
        <id>P41227</id>
        <label>NAA10</label>
    </interactant>
    <organismsDiffer>false</organismsDiffer>
    <experiments>3</experiments>
</comment>
<comment type="interaction">
    <interactant intactId="EBI-9640281">
        <id>Q5VU43-2</id>
    </interactant>
    <interactant intactId="EBI-748391">
        <id>Q9BWG6</id>
        <label>SCNM1</label>
    </interactant>
    <organismsDiffer>false</organismsDiffer>
    <experiments>3</experiments>
</comment>
<comment type="interaction">
    <interactant intactId="EBI-9640281">
        <id>Q5VU43-2</id>
    </interactant>
    <interactant intactId="EBI-727004">
        <id>O00560</id>
        <label>SDCBP</label>
    </interactant>
    <organismsDiffer>false</organismsDiffer>
    <experiments>4</experiments>
</comment>
<comment type="interaction">
    <interactant intactId="EBI-9640281">
        <id>Q5VU43-2</id>
    </interactant>
    <interactant intactId="EBI-744471">
        <id>O43167</id>
        <label>ZBTB24</label>
    </interactant>
    <organismsDiffer>false</organismsDiffer>
    <experiments>3</experiments>
</comment>
<comment type="interaction">
    <interactant intactId="EBI-9640281">
        <id>Q5VU43-2</id>
    </interactant>
    <interactant intactId="EBI-2564133">
        <id>Q9P1Z0</id>
        <label>ZBTB4</label>
    </interactant>
    <organismsDiffer>false</organismsDiffer>
    <experiments>3</experiments>
</comment>
<comment type="interaction">
    <interactant intactId="EBI-9640281">
        <id>Q5VU43-2</id>
    </interactant>
    <interactant intactId="EBI-1965777">
        <id>Q9BRR0</id>
        <label>ZKSCAN3</label>
    </interactant>
    <organismsDiffer>false</organismsDiffer>
    <experiments>3</experiments>
</comment>
<comment type="interaction">
    <interactant intactId="EBI-9640281">
        <id>Q5VU43-2</id>
    </interactant>
    <interactant intactId="EBI-2555767">
        <id>Q15973</id>
        <label>ZNF124</label>
    </interactant>
    <organismsDiffer>false</organismsDiffer>
    <experiments>3</experiments>
</comment>
<comment type="interaction">
    <interactant intactId="EBI-9640281">
        <id>Q5VU43-2</id>
    </interactant>
    <interactant intactId="EBI-11741890">
        <id>Q86VK4-3</id>
        <label>ZNF410</label>
    </interactant>
    <organismsDiffer>false</organismsDiffer>
    <experiments>3</experiments>
</comment>
<comment type="interaction">
    <interactant intactId="EBI-9640281">
        <id>Q5VU43-2</id>
    </interactant>
    <interactant intactId="EBI-744257">
        <id>Q96IQ9</id>
        <label>ZNF414</label>
    </interactant>
    <organismsDiffer>false</organismsDiffer>
    <experiments>3</experiments>
</comment>
<comment type="interaction">
    <interactant intactId="EBI-9640281">
        <id>Q5VU43-2</id>
    </interactant>
    <interactant intactId="EBI-745520">
        <id>Q9P0T4</id>
        <label>ZNF581</label>
    </interactant>
    <organismsDiffer>false</organismsDiffer>
    <experiments>3</experiments>
</comment>
<comment type="interaction">
    <interactant intactId="EBI-9640281">
        <id>Q5VU43-2</id>
    </interactant>
    <interactant intactId="EBI-6427977">
        <id>Q96SQ5</id>
        <label>ZNF587</label>
    </interactant>
    <organismsDiffer>false</organismsDiffer>
    <experiments>3</experiments>
</comment>
<comment type="interaction">
    <interactant intactId="EBI-9640281">
        <id>Q5VU43-2</id>
    </interactant>
    <interactant intactId="EBI-11090299">
        <id>Q9H7X3</id>
        <label>ZNF696</label>
    </interactant>
    <organismsDiffer>false</organismsDiffer>
    <experiments>3</experiments>
</comment>
<comment type="interaction">
    <interactant intactId="EBI-25837868">
        <id>Q5VU43-8</id>
    </interactant>
    <interactant intactId="EBI-25837549">
        <id>P28329-3</id>
        <label>CHAT</label>
    </interactant>
    <organismsDiffer>false</organismsDiffer>
    <experiments>3</experiments>
</comment>
<comment type="interaction">
    <interactant intactId="EBI-25837868">
        <id>Q5VU43-8</id>
    </interactant>
    <interactant intactId="EBI-348399">
        <id>P22607</id>
        <label>FGFR3</label>
    </interactant>
    <organismsDiffer>false</organismsDiffer>
    <experiments>3</experiments>
</comment>
<comment type="interaction">
    <interactant intactId="EBI-10769071">
        <id>Q5VU43-11</id>
    </interactant>
    <interactant intactId="EBI-1550064">
        <id>Q9H0A8</id>
        <label>COMMD4</label>
    </interactant>
    <organismsDiffer>false</organismsDiffer>
    <experiments>4</experiments>
</comment>
<comment type="interaction">
    <interactant intactId="EBI-10769071">
        <id>Q5VU43-11</id>
    </interactant>
    <interactant intactId="EBI-704176">
        <id>Q14896</id>
        <label>MYBPC3</label>
    </interactant>
    <organismsDiffer>false</organismsDiffer>
    <experiments>5</experiments>
</comment>
<comment type="interaction">
    <interactant intactId="EBI-10769071">
        <id>Q5VU43-11</id>
    </interactant>
    <interactant intactId="EBI-704146">
        <id>P19429</id>
        <label>TNNI3</label>
    </interactant>
    <organismsDiffer>false</organismsDiffer>
    <experiments>4</experiments>
</comment>
<comment type="interaction">
    <interactant intactId="EBI-10769071">
        <id>Q5VU43-11</id>
    </interactant>
    <interactant intactId="EBI-10817505">
        <id>Q8R560</id>
        <label>Ankrd1</label>
    </interactant>
    <organismsDiffer>true</organismsDiffer>
    <experiments>2</experiments>
</comment>
<comment type="interaction">
    <interactant intactId="EBI-10769071">
        <id>Q5VU43-11</id>
    </interactant>
    <interactant intactId="EBI-915852">
        <id>P04764</id>
        <label>Eno1</label>
    </interactant>
    <organismsDiffer>true</organismsDiffer>
    <experiments>2</experiments>
</comment>
<comment type="interaction">
    <interactant intactId="EBI-10769071">
        <id>Q5VU43-11</id>
    </interactant>
    <interactant intactId="EBI-10817548">
        <id>P15429</id>
        <label>Eno3</label>
    </interactant>
    <organismsDiffer>true</organismsDiffer>
    <experiments>2</experiments>
</comment>
<comment type="interaction">
    <interactant intactId="EBI-10769071">
        <id>Q5VU43-11</id>
    </interactant>
    <interactant intactId="EBI-916215">
        <id>P09456</id>
        <label>Prkar1a</label>
    </interactant>
    <organismsDiffer>true</organismsDiffer>
    <experiments>2</experiments>
</comment>
<comment type="interaction">
    <interactant intactId="EBI-10769071">
        <id>Q5VU43-11</id>
    </interactant>
    <interactant intactId="EBI-919521">
        <id>P12368</id>
        <label>Prkar2a</label>
    </interactant>
    <organismsDiffer>true</organismsDiffer>
    <experiments>2</experiments>
</comment>
<comment type="interaction">
    <interactant intactId="EBI-10769071">
        <id>Q5VU43-11</id>
    </interactant>
    <interactant intactId="EBI-10817583">
        <id>P23693</id>
        <label>Tnni3</label>
    </interactant>
    <organismsDiffer>true</organismsDiffer>
    <experiments>2</experiments>
</comment>
<comment type="subcellular location">
    <subcellularLocation>
        <location evidence="11">Golgi apparatus</location>
    </subcellularLocation>
    <subcellularLocation>
        <location evidence="1">Cytoplasm</location>
        <location evidence="1">Cytoskeleton</location>
        <location evidence="1">Microtubule organizing center</location>
        <location evidence="1">Centrosome</location>
    </subcellularLocation>
</comment>
<comment type="subcellular location">
    <molecule>Isoform 13</molecule>
    <subcellularLocation>
        <location evidence="13">Cytoplasm</location>
        <location evidence="13">Cytoskeleton</location>
        <location evidence="13">Microtubule organizing center</location>
        <location evidence="13">Centrosome</location>
    </subcellularLocation>
    <subcellularLocation>
        <location evidence="13">Cytoplasm</location>
        <location evidence="13">Cytoskeleton</location>
    </subcellularLocation>
    <subcellularLocation>
        <location evidence="10">Golgi apparatus</location>
    </subcellularLocation>
    <text evidence="10 13">Associated with the microtubule network at the growing distal tip of microtubules (PubMed:29162697). Targeting to the Golgi apparatus requires AKAP9 (PubMed:25217626).</text>
</comment>
<comment type="alternative products">
    <event type="alternative splicing"/>
    <isoform>
        <id>Q5VU43-1</id>
        <name>1</name>
        <sequence type="displayed"/>
    </isoform>
    <isoform>
        <id>Q5VU43-2</id>
        <name>2</name>
        <sequence type="described" ref="VSP_028772 VSP_028779"/>
    </isoform>
    <isoform>
        <id>Q5VU43-3</id>
        <name>3</name>
        <sequence type="described" ref="VSP_028773 VSP_028781 VSP_028782"/>
    </isoform>
    <isoform>
        <id>Q5VU43-4</id>
        <name>4</name>
        <sequence type="described" ref="VSP_028783"/>
    </isoform>
    <isoform>
        <id>Q5VU43-6</id>
        <name>6</name>
        <sequence type="described" ref="VSP_028779"/>
    </isoform>
    <isoform>
        <id>Q5VU43-7</id>
        <name>7</name>
        <sequence type="described" ref="VSP_028778 VSP_028780"/>
    </isoform>
    <isoform>
        <id>Q5VU43-8</id>
        <name>8</name>
        <sequence type="described" ref="VSP_028774 VSP_028775"/>
    </isoform>
    <isoform>
        <id>Q5VU43-9</id>
        <name>9</name>
        <sequence type="described" ref="VSP_028774 VSP_028776 VSP_028777"/>
    </isoform>
    <isoform>
        <id>Q5VU43-10</id>
        <name>10</name>
        <sequence type="described" ref="VSP_028776 VSP_028777"/>
    </isoform>
    <isoform>
        <id>Q5VU43-11</id>
        <name>11</name>
        <sequence type="described" ref="VSP_028775"/>
    </isoform>
    <isoform>
        <id>Q5VU43-12</id>
        <name>12</name>
        <sequence type="described" ref="VSP_028773 VSP_028776 VSP_028777"/>
    </isoform>
    <isoform>
        <id>Q5VU43-13</id>
        <name>13</name>
        <name evidence="18">Myomegalin variant 8</name>
        <name evidence="19 20">MMG</name>
        <name evidence="18">MMG8</name>
        <name evidence="21">Short myomegalin-like EB1 binding protein</name>
        <name evidence="21">SMYLE</name>
        <sequence type="described" ref="VSP_028772 VSP_059333 VSP_059334"/>
    </isoform>
</comment>
<comment type="tissue specificity">
    <text evidence="5">Highly expressed in adult and fetal heart, in skeletal muscle and, to a lower extent, in brain and placenta.</text>
</comment>
<comment type="domain">
    <molecule>Isoform 13</molecule>
    <text evidence="13">Residues 1-150 are involved in AKAP9-binding.</text>
</comment>
<comment type="disease">
    <text evidence="6">A chromosomal aberration involving PDE4DIP may be the cause of a myeloproliferative disorder (MBD) associated with eosinophilia. Translocation t(1;5)(q23;q33) that forms a PDE4DIP-PDGFRB fusion protein.</text>
</comment>
<comment type="miscellaneous">
    <molecule>Isoform 13</molecule>
    <text evidence="10 12 13 23">Mutagenesis at position 311-312:LP-&gt;AA (loss of MAPRE1- and MAPRE3-binding and loss of association with microtubule ends, no effect on AKAP9- and CDK5RAP2-binding, relocalizes from EB1/MAPRE1 microtubule ends to centrosomal area).</text>
</comment>
<comment type="caution">
    <text evidence="5 11">Was initially reported to localize in the cytoplasm and nucleus (PubMed:11374908). However, many reports in different species have shown that it is associated with the Golgi apparatus and the centrosome.</text>
</comment>
<comment type="sequence caution" evidence="23">
    <conflict type="miscellaneous discrepancy">
        <sequence resource="EMBL-CDS" id="AAH04860"/>
    </conflict>
    <text>Contaminating sequence. Potential poly-A sequence.</text>
</comment>
<comment type="sequence caution" evidence="23">
    <conflict type="erroneous initiation">
        <sequence resource="EMBL-CDS" id="BAA32299"/>
    </conflict>
    <text>Extended N-terminus.</text>
</comment>
<comment type="sequence caution" evidence="23">
    <conflict type="erroneous initiation">
        <sequence resource="EMBL-CDS" id="BAA32322"/>
    </conflict>
    <text>Extended N-terminus.</text>
</comment>
<comment type="sequence caution" evidence="23">
    <conflict type="frameshift">
        <sequence resource="EMBL-CDS" id="CAD91152"/>
    </conflict>
</comment>
<comment type="sequence caution" evidence="23">
    <conflict type="miscellaneous discrepancy">
        <sequence resource="EMBL-CDS" id="CAH18128"/>
    </conflict>
    <text>Probable cloning artifact.</text>
</comment>
<comment type="online information" name="Atlas of Genetics and Cytogenetics in Oncology and Haematology">
    <link uri="https://atlasgeneticsoncology.org/gene/180/PDE4DIP01q22"/>
</comment>
<reference key="1">
    <citation type="journal article" date="2001" name="Genomics">
        <title>Isolation of novel heart-specific genes using the BodyMap database.</title>
        <authorList>
            <person name="Soejima H."/>
            <person name="Kawamoto S."/>
            <person name="Akai J."/>
            <person name="Miyoshi O."/>
            <person name="Arai Y."/>
            <person name="Morohka T."/>
            <person name="Matsuo S."/>
            <person name="Niikawa N."/>
            <person name="Kimura A."/>
            <person name="Okubo K."/>
            <person name="Mukai T."/>
        </authorList>
    </citation>
    <scope>NUCLEOTIDE SEQUENCE [MRNA] (ISOFORMS 10; 11 AND 12)</scope>
    <scope>TISSUE SPECIFICITY</scope>
    <scope>VARIANT THR-49</scope>
    <source>
        <tissue>Myocardium</tissue>
    </source>
</reference>
<reference key="2">
    <citation type="journal article" date="2014" name="J. Cell Sci.">
        <title>A newly identified myomegalin isoform functions in Golgi microtubule organization and ER-Golgi transport.</title>
        <authorList>
            <person name="Wang Z."/>
            <person name="Zhang C."/>
            <person name="Qi R.Z."/>
        </authorList>
    </citation>
    <scope>NUCLEOTIDE SEQUENCE [MRNA] (ISOFORM 13)</scope>
    <scope>FUNCTION (ISOFORM 13)</scope>
    <scope>INTERACTION WITH AKAP9; GAMMA-TUBULIN RING COMPLEX; MAPRE1 AND MAPRE3 (ISOFORM 13)</scope>
    <scope>SUBCELLULAR LOCATION (ISOFORM 13)</scope>
    <scope>MUTAGENESIS (ISOFORM 13)</scope>
</reference>
<reference key="3">
    <citation type="journal article" date="1997" name="DNA Res.">
        <title>Characterization of cDNA clones in size-fractionated cDNA libraries from human brain.</title>
        <authorList>
            <person name="Seki N."/>
            <person name="Ohira M."/>
            <person name="Nagase T."/>
            <person name="Ishikawa K."/>
            <person name="Miyajima N."/>
            <person name="Nakajima D."/>
            <person name="Nomura N."/>
            <person name="Ohara O."/>
        </authorList>
    </citation>
    <scope>NUCLEOTIDE SEQUENCE [LARGE SCALE MRNA] (ISOFORMS 2 AND 3)</scope>
    <source>
        <tissue>Brain</tissue>
    </source>
</reference>
<reference key="4">
    <citation type="journal article" date="2002" name="DNA Res.">
        <title>Construction of expression-ready cDNA clones for KIAA genes: manual curation of 330 KIAA cDNA clones.</title>
        <authorList>
            <person name="Nakajima D."/>
            <person name="Okazaki N."/>
            <person name="Yamakawa H."/>
            <person name="Kikuno R."/>
            <person name="Ohara O."/>
            <person name="Nagase T."/>
        </authorList>
    </citation>
    <scope>SEQUENCE REVISION</scope>
</reference>
<reference key="5">
    <citation type="journal article" date="2007" name="BMC Genomics">
        <title>The full-ORF clone resource of the German cDNA consortium.</title>
        <authorList>
            <person name="Bechtel S."/>
            <person name="Rosenfelder H."/>
            <person name="Duda A."/>
            <person name="Schmidt C.P."/>
            <person name="Ernst U."/>
            <person name="Wellenreuther R."/>
            <person name="Mehrle A."/>
            <person name="Schuster C."/>
            <person name="Bahr A."/>
            <person name="Bloecker H."/>
            <person name="Heubner D."/>
            <person name="Hoerlein A."/>
            <person name="Michel G."/>
            <person name="Wedler H."/>
            <person name="Koehrer K."/>
            <person name="Ottenwaelder B."/>
            <person name="Poustka A."/>
            <person name="Wiemann S."/>
            <person name="Schupp I."/>
        </authorList>
    </citation>
    <scope>NUCLEOTIDE SEQUENCE [LARGE SCALE MRNA] (ISOFORMS 1; 6 AND 7)</scope>
    <scope>VARIANTS CYS-708; ILE-1013; THR-1066; GLU-1359; GLU-1736 AND SER-1742</scope>
    <source>
        <tissue>Amygdala</tissue>
        <tissue>Skeletal muscle</tissue>
    </source>
</reference>
<reference key="6">
    <citation type="journal article" date="2006" name="Nature">
        <title>The DNA sequence and biological annotation of human chromosome 1.</title>
        <authorList>
            <person name="Gregory S.G."/>
            <person name="Barlow K.F."/>
            <person name="McLay K.E."/>
            <person name="Kaul R."/>
            <person name="Swarbreck D."/>
            <person name="Dunham A."/>
            <person name="Scott C.E."/>
            <person name="Howe K.L."/>
            <person name="Woodfine K."/>
            <person name="Spencer C.C.A."/>
            <person name="Jones M.C."/>
            <person name="Gillson C."/>
            <person name="Searle S."/>
            <person name="Zhou Y."/>
            <person name="Kokocinski F."/>
            <person name="McDonald L."/>
            <person name="Evans R."/>
            <person name="Phillips K."/>
            <person name="Atkinson A."/>
            <person name="Cooper R."/>
            <person name="Jones C."/>
            <person name="Hall R.E."/>
            <person name="Andrews T.D."/>
            <person name="Lloyd C."/>
            <person name="Ainscough R."/>
            <person name="Almeida J.P."/>
            <person name="Ambrose K.D."/>
            <person name="Anderson F."/>
            <person name="Andrew R.W."/>
            <person name="Ashwell R.I.S."/>
            <person name="Aubin K."/>
            <person name="Babbage A.K."/>
            <person name="Bagguley C.L."/>
            <person name="Bailey J."/>
            <person name="Beasley H."/>
            <person name="Bethel G."/>
            <person name="Bird C.P."/>
            <person name="Bray-Allen S."/>
            <person name="Brown J.Y."/>
            <person name="Brown A.J."/>
            <person name="Buckley D."/>
            <person name="Burton J."/>
            <person name="Bye J."/>
            <person name="Carder C."/>
            <person name="Chapman J.C."/>
            <person name="Clark S.Y."/>
            <person name="Clarke G."/>
            <person name="Clee C."/>
            <person name="Cobley V."/>
            <person name="Collier R.E."/>
            <person name="Corby N."/>
            <person name="Coville G.J."/>
            <person name="Davies J."/>
            <person name="Deadman R."/>
            <person name="Dunn M."/>
            <person name="Earthrowl M."/>
            <person name="Ellington A.G."/>
            <person name="Errington H."/>
            <person name="Frankish A."/>
            <person name="Frankland J."/>
            <person name="French L."/>
            <person name="Garner P."/>
            <person name="Garnett J."/>
            <person name="Gay L."/>
            <person name="Ghori M.R.J."/>
            <person name="Gibson R."/>
            <person name="Gilby L.M."/>
            <person name="Gillett W."/>
            <person name="Glithero R.J."/>
            <person name="Grafham D.V."/>
            <person name="Griffiths C."/>
            <person name="Griffiths-Jones S."/>
            <person name="Grocock R."/>
            <person name="Hammond S."/>
            <person name="Harrison E.S.I."/>
            <person name="Hart E."/>
            <person name="Haugen E."/>
            <person name="Heath P.D."/>
            <person name="Holmes S."/>
            <person name="Holt K."/>
            <person name="Howden P.J."/>
            <person name="Hunt A.R."/>
            <person name="Hunt S.E."/>
            <person name="Hunter G."/>
            <person name="Isherwood J."/>
            <person name="James R."/>
            <person name="Johnson C."/>
            <person name="Johnson D."/>
            <person name="Joy A."/>
            <person name="Kay M."/>
            <person name="Kershaw J.K."/>
            <person name="Kibukawa M."/>
            <person name="Kimberley A.M."/>
            <person name="King A."/>
            <person name="Knights A.J."/>
            <person name="Lad H."/>
            <person name="Laird G."/>
            <person name="Lawlor S."/>
            <person name="Leongamornlert D.A."/>
            <person name="Lloyd D.M."/>
            <person name="Loveland J."/>
            <person name="Lovell J."/>
            <person name="Lush M.J."/>
            <person name="Lyne R."/>
            <person name="Martin S."/>
            <person name="Mashreghi-Mohammadi M."/>
            <person name="Matthews L."/>
            <person name="Matthews N.S.W."/>
            <person name="McLaren S."/>
            <person name="Milne S."/>
            <person name="Mistry S."/>
            <person name="Moore M.J.F."/>
            <person name="Nickerson T."/>
            <person name="O'Dell C.N."/>
            <person name="Oliver K."/>
            <person name="Palmeiri A."/>
            <person name="Palmer S.A."/>
            <person name="Parker A."/>
            <person name="Patel D."/>
            <person name="Pearce A.V."/>
            <person name="Peck A.I."/>
            <person name="Pelan S."/>
            <person name="Phelps K."/>
            <person name="Phillimore B.J."/>
            <person name="Plumb R."/>
            <person name="Rajan J."/>
            <person name="Raymond C."/>
            <person name="Rouse G."/>
            <person name="Saenphimmachak C."/>
            <person name="Sehra H.K."/>
            <person name="Sheridan E."/>
            <person name="Shownkeen R."/>
            <person name="Sims S."/>
            <person name="Skuce C.D."/>
            <person name="Smith M."/>
            <person name="Steward C."/>
            <person name="Subramanian S."/>
            <person name="Sycamore N."/>
            <person name="Tracey A."/>
            <person name="Tromans A."/>
            <person name="Van Helmond Z."/>
            <person name="Wall M."/>
            <person name="Wallis J.M."/>
            <person name="White S."/>
            <person name="Whitehead S.L."/>
            <person name="Wilkinson J.E."/>
            <person name="Willey D.L."/>
            <person name="Williams H."/>
            <person name="Wilming L."/>
            <person name="Wray P.W."/>
            <person name="Wu Z."/>
            <person name="Coulson A."/>
            <person name="Vaudin M."/>
            <person name="Sulston J.E."/>
            <person name="Durbin R.M."/>
            <person name="Hubbard T."/>
            <person name="Wooster R."/>
            <person name="Dunham I."/>
            <person name="Carter N.P."/>
            <person name="McVean G."/>
            <person name="Ross M.T."/>
            <person name="Harrow J."/>
            <person name="Olson M.V."/>
            <person name="Beck S."/>
            <person name="Rogers J."/>
            <person name="Bentley D.R."/>
        </authorList>
    </citation>
    <scope>NUCLEOTIDE SEQUENCE [LARGE SCALE GENOMIC DNA]</scope>
    <scope>VARIANTS CYS-708 AND TRP-1396</scope>
</reference>
<reference key="7">
    <citation type="journal article" date="2004" name="Genome Res.">
        <title>The status, quality, and expansion of the NIH full-length cDNA project: the Mammalian Gene Collection (MGC).</title>
        <authorList>
            <consortium name="The MGC Project Team"/>
        </authorList>
    </citation>
    <scope>NUCLEOTIDE SEQUENCE [LARGE SCALE MRNA] (ISOFORMS 2; 8 AND 9)</scope>
    <scope>VARIANT THR-49</scope>
    <source>
        <tissue>Brain</tissue>
        <tissue>Placenta</tissue>
    </source>
</reference>
<reference key="8">
    <citation type="journal article" date="2004" name="Nat. Genet.">
        <title>Complete sequencing and characterization of 21,243 full-length human cDNAs.</title>
        <authorList>
            <person name="Ota T."/>
            <person name="Suzuki Y."/>
            <person name="Nishikawa T."/>
            <person name="Otsuki T."/>
            <person name="Sugiyama T."/>
            <person name="Irie R."/>
            <person name="Wakamatsu A."/>
            <person name="Hayashi K."/>
            <person name="Sato H."/>
            <person name="Nagai K."/>
            <person name="Kimura K."/>
            <person name="Makita H."/>
            <person name="Sekine M."/>
            <person name="Obayashi M."/>
            <person name="Nishi T."/>
            <person name="Shibahara T."/>
            <person name="Tanaka T."/>
            <person name="Ishii S."/>
            <person name="Yamamoto J."/>
            <person name="Saito K."/>
            <person name="Kawai Y."/>
            <person name="Isono Y."/>
            <person name="Nakamura Y."/>
            <person name="Nagahari K."/>
            <person name="Murakami K."/>
            <person name="Yasuda T."/>
            <person name="Iwayanagi T."/>
            <person name="Wagatsuma M."/>
            <person name="Shiratori A."/>
            <person name="Sudo H."/>
            <person name="Hosoiri T."/>
            <person name="Kaku Y."/>
            <person name="Kodaira H."/>
            <person name="Kondo H."/>
            <person name="Sugawara M."/>
            <person name="Takahashi M."/>
            <person name="Kanda K."/>
            <person name="Yokoi T."/>
            <person name="Furuya T."/>
            <person name="Kikkawa E."/>
            <person name="Omura Y."/>
            <person name="Abe K."/>
            <person name="Kamihara K."/>
            <person name="Katsuta N."/>
            <person name="Sato K."/>
            <person name="Tanikawa M."/>
            <person name="Yamazaki M."/>
            <person name="Ninomiya K."/>
            <person name="Ishibashi T."/>
            <person name="Yamashita H."/>
            <person name="Murakawa K."/>
            <person name="Fujimori K."/>
            <person name="Tanai H."/>
            <person name="Kimata M."/>
            <person name="Watanabe M."/>
            <person name="Hiraoka S."/>
            <person name="Chiba Y."/>
            <person name="Ishida S."/>
            <person name="Ono Y."/>
            <person name="Takiguchi S."/>
            <person name="Watanabe S."/>
            <person name="Yosida M."/>
            <person name="Hotuta T."/>
            <person name="Kusano J."/>
            <person name="Kanehori K."/>
            <person name="Takahashi-Fujii A."/>
            <person name="Hara H."/>
            <person name="Tanase T.-O."/>
            <person name="Nomura Y."/>
            <person name="Togiya S."/>
            <person name="Komai F."/>
            <person name="Hara R."/>
            <person name="Takeuchi K."/>
            <person name="Arita M."/>
            <person name="Imose N."/>
            <person name="Musashino K."/>
            <person name="Yuuki H."/>
            <person name="Oshima A."/>
            <person name="Sasaki N."/>
            <person name="Aotsuka S."/>
            <person name="Yoshikawa Y."/>
            <person name="Matsunawa H."/>
            <person name="Ichihara T."/>
            <person name="Shiohata N."/>
            <person name="Sano S."/>
            <person name="Moriya S."/>
            <person name="Momiyama H."/>
            <person name="Satoh N."/>
            <person name="Takami S."/>
            <person name="Terashima Y."/>
            <person name="Suzuki O."/>
            <person name="Nakagawa S."/>
            <person name="Senoh A."/>
            <person name="Mizoguchi H."/>
            <person name="Goto Y."/>
            <person name="Shimizu F."/>
            <person name="Wakebe H."/>
            <person name="Hishigaki H."/>
            <person name="Watanabe T."/>
            <person name="Sugiyama A."/>
            <person name="Takemoto M."/>
            <person name="Kawakami B."/>
            <person name="Yamazaki M."/>
            <person name="Watanabe K."/>
            <person name="Kumagai A."/>
            <person name="Itakura S."/>
            <person name="Fukuzumi Y."/>
            <person name="Fujimori Y."/>
            <person name="Komiyama M."/>
            <person name="Tashiro H."/>
            <person name="Tanigami A."/>
            <person name="Fujiwara T."/>
            <person name="Ono T."/>
            <person name="Yamada K."/>
            <person name="Fujii Y."/>
            <person name="Ozaki K."/>
            <person name="Hirao M."/>
            <person name="Ohmori Y."/>
            <person name="Kawabata A."/>
            <person name="Hikiji T."/>
            <person name="Kobatake N."/>
            <person name="Inagaki H."/>
            <person name="Ikema Y."/>
            <person name="Okamoto S."/>
            <person name="Okitani R."/>
            <person name="Kawakami T."/>
            <person name="Noguchi S."/>
            <person name="Itoh T."/>
            <person name="Shigeta K."/>
            <person name="Senba T."/>
            <person name="Matsumura K."/>
            <person name="Nakajima Y."/>
            <person name="Mizuno T."/>
            <person name="Morinaga M."/>
            <person name="Sasaki M."/>
            <person name="Togashi T."/>
            <person name="Oyama M."/>
            <person name="Hata H."/>
            <person name="Watanabe M."/>
            <person name="Komatsu T."/>
            <person name="Mizushima-Sugano J."/>
            <person name="Satoh T."/>
            <person name="Shirai Y."/>
            <person name="Takahashi Y."/>
            <person name="Nakagawa K."/>
            <person name="Okumura K."/>
            <person name="Nagase T."/>
            <person name="Nomura N."/>
            <person name="Kikuchi H."/>
            <person name="Masuho Y."/>
            <person name="Yamashita R."/>
            <person name="Nakai K."/>
            <person name="Yada T."/>
            <person name="Nakamura Y."/>
            <person name="Ohara O."/>
            <person name="Isogai T."/>
            <person name="Sugano S."/>
        </authorList>
    </citation>
    <scope>NUCLEOTIDE SEQUENCE [LARGE SCALE MRNA] OF 2261-2346 (ISOFORM 4)</scope>
    <source>
        <tissue>Skeletal muscle</tissue>
    </source>
</reference>
<reference key="9">
    <citation type="journal article" date="2003" name="Blood">
        <title>Cloning of the t(1;5)(q23;q33) in a myeloproliferative disorder associated with eosinophilia: involvement of PDGFRB and response to imatinib.</title>
        <authorList>
            <person name="Wilkinson K."/>
            <person name="Velloso E.R.P."/>
            <person name="Lopes L.F."/>
            <person name="Lee C."/>
            <person name="Aster J.C."/>
            <person name="Shipp M.A."/>
            <person name="Aguiar R.C.T."/>
        </authorList>
    </citation>
    <scope>CHROMOSOMAL TRANSLOCATION WITH PDGFRB</scope>
</reference>
<reference key="10">
    <citation type="journal article" date="2008" name="Proc. Natl. Acad. Sci. U.S.A.">
        <title>A quantitative atlas of mitotic phosphorylation.</title>
        <authorList>
            <person name="Dephoure N."/>
            <person name="Zhou C."/>
            <person name="Villen J."/>
            <person name="Beausoleil S.A."/>
            <person name="Bakalarski C.E."/>
            <person name="Elledge S.J."/>
            <person name="Gygi S.P."/>
        </authorList>
    </citation>
    <scope>PHOSPHORYLATION [LARGE SCALE ANALYSIS] AT THR-704</scope>
    <scope>IDENTIFICATION BY MASS SPECTROMETRY [LARGE SCALE ANALYSIS]</scope>
    <source>
        <tissue>Cervix carcinoma</tissue>
    </source>
</reference>
<reference key="11">
    <citation type="journal article" date="2011" name="BMC Syst. Biol.">
        <title>Initial characterization of the human central proteome.</title>
        <authorList>
            <person name="Burkard T.R."/>
            <person name="Planyavsky M."/>
            <person name="Kaupe I."/>
            <person name="Breitwieser F.P."/>
            <person name="Buerckstuemmer T."/>
            <person name="Bennett K.L."/>
            <person name="Superti-Furga G."/>
            <person name="Colinge J."/>
        </authorList>
    </citation>
    <scope>IDENTIFICATION BY MASS SPECTROMETRY [LARGE SCALE ANALYSIS]</scope>
</reference>
<reference key="12">
    <citation type="journal article" date="2013" name="J. Proteome Res.">
        <title>Toward a comprehensive characterization of a human cancer cell phosphoproteome.</title>
        <authorList>
            <person name="Zhou H."/>
            <person name="Di Palma S."/>
            <person name="Preisinger C."/>
            <person name="Peng M."/>
            <person name="Polat A.N."/>
            <person name="Heck A.J."/>
            <person name="Mohammed S."/>
        </authorList>
    </citation>
    <scope>IDENTIFICATION BY MASS SPECTROMETRY [LARGE SCALE ANALYSIS]</scope>
    <source>
        <tissue>Cervix carcinoma</tissue>
    </source>
</reference>
<reference key="13">
    <citation type="journal article" date="2014" name="J. Proteomics">
        <title>An enzyme assisted RP-RPLC approach for in-depth analysis of human liver phosphoproteome.</title>
        <authorList>
            <person name="Bian Y."/>
            <person name="Song C."/>
            <person name="Cheng K."/>
            <person name="Dong M."/>
            <person name="Wang F."/>
            <person name="Huang J."/>
            <person name="Sun D."/>
            <person name="Wang L."/>
            <person name="Ye M."/>
            <person name="Zou H."/>
        </authorList>
    </citation>
    <scope>PHOSPHORYLATION [LARGE SCALE ANALYSIS] AT SER-252 (ISOFORMS 13 AND 2)</scope>
    <scope>IDENTIFICATION BY MASS SPECTROMETRY [LARGE SCALE ANALYSIS]</scope>
    <source>
        <tissue>Liver</tissue>
    </source>
</reference>
<reference key="14">
    <citation type="journal article" date="2016" name="Dev. Cell">
        <title>Molecular pathway of microtubule organization at the Golgi apparatus.</title>
        <authorList>
            <person name="Wu J."/>
            <person name="de Heus C."/>
            <person name="Liu Q."/>
            <person name="Bouchet B.P."/>
            <person name="Noordstra I."/>
            <person name="Jiang K."/>
            <person name="Hua S."/>
            <person name="Martin M."/>
            <person name="Yang C."/>
            <person name="Grigoriev I."/>
            <person name="Katrukha E.A."/>
            <person name="Altelaar A.F."/>
            <person name="Hoogenraad C.C."/>
            <person name="Qi R.Z."/>
            <person name="Klumperman J."/>
            <person name="Akhmanova A."/>
        </authorList>
    </citation>
    <scope>FUNCTION (ISOFORM 13)</scope>
    <scope>SUBCELLULAR LOCATION (ISOFORM 13)</scope>
    <scope>INTERACTION WITH AKAP9 AND CAMSAP2 (ISOFORM 13)</scope>
</reference>
<reference key="15">
    <citation type="journal article" date="2017" name="J. Cell Biol.">
        <title>EB1 and EB3 regulate microtubule minus end organization and Golgi morphology.</title>
        <authorList>
            <person name="Yang C."/>
            <person name="Wu J."/>
            <person name="de Heus C."/>
            <person name="Grigoriev I."/>
            <person name="Liv N."/>
            <person name="Yao Y."/>
            <person name="Smal I."/>
            <person name="Meijering E."/>
            <person name="Klumperman J."/>
            <person name="Qi R.Z."/>
            <person name="Akhmanova A."/>
        </authorList>
    </citation>
    <scope>FUNCTION (ISOFORM 13)</scope>
    <scope>INTERACTION WITH AKAP9; CAMSAP2; MAPRE1 AND MAPRE3 (ISOFORM 13)</scope>
    <scope>MUTAGENESIS (ISOFORM 13)</scope>
</reference>
<reference key="16">
    <citation type="journal article" date="2017" name="Proc. Natl. Acad. Sci. U.S.A.">
        <title>EB1-binding-myomegalin protein complex promotes centrosomal microtubules functions.</title>
        <authorList>
            <person name="Bouguenina H."/>
            <person name="Salaun D."/>
            <person name="Mangon A."/>
            <person name="Muller L."/>
            <person name="Baudelet E."/>
            <person name="Camoin L."/>
            <person name="Tachibana T."/>
            <person name="Cianferani S."/>
            <person name="Audebert S."/>
            <person name="Verdier-Pinard P."/>
            <person name="Badache A."/>
        </authorList>
    </citation>
    <scope>INTERACTION WITH AKAP9; CDK5RAP2; LGALS3BP AND MAPRE1 (ISOFORM 13)</scope>
    <scope>SUBCELLULAR LOCATION (ISOFORM 13)</scope>
    <scope>IDENTIFICATION BY MASS SPECTROMETRY (ISOFORM 13)</scope>
    <scope>MUTAGENESIS (ISOFORM 13)</scope>
    <scope>DOMAIN</scope>
</reference>
<organism>
    <name type="scientific">Homo sapiens</name>
    <name type="common">Human</name>
    <dbReference type="NCBI Taxonomy" id="9606"/>
    <lineage>
        <taxon>Eukaryota</taxon>
        <taxon>Metazoa</taxon>
        <taxon>Chordata</taxon>
        <taxon>Craniata</taxon>
        <taxon>Vertebrata</taxon>
        <taxon>Euteleostomi</taxon>
        <taxon>Mammalia</taxon>
        <taxon>Eutheria</taxon>
        <taxon>Euarchontoglires</taxon>
        <taxon>Primates</taxon>
        <taxon>Haplorrhini</taxon>
        <taxon>Catarrhini</taxon>
        <taxon>Hominidae</taxon>
        <taxon>Homo</taxon>
    </lineage>
</organism>
<protein>
    <recommendedName>
        <fullName>Myomegalin</fullName>
    </recommendedName>
    <alternativeName>
        <fullName>Cardiomyopathy-associated protein 2</fullName>
    </alternativeName>
    <alternativeName>
        <fullName>Phosphodiesterase 4D-interacting protein</fullName>
    </alternativeName>
</protein>
<gene>
    <name type="primary">PDE4DIP</name>
    <name type="synonym">CMYA2</name>
    <name type="synonym">KIAA0454</name>
    <name type="synonym">KIAA0477</name>
    <name type="synonym">MMGL</name>
</gene>
<accession>Q5VU43</accession>
<accession>A0A0A0MRM0</accession>
<accession>A0A0C4DFQ0</accession>
<accession>A2RU15</accession>
<accession>E9PL24</accession>
<accession>O75042</accession>
<accession>O75065</accession>
<accession>Q2YDC1</accession>
<accession>Q5VU42</accession>
<accession>Q5VU44</accession>
<accession>Q5VU45</accession>
<accession>Q5VU46</accession>
<accession>Q5VU47</accession>
<accession>Q5VU48</accession>
<accession>Q5VU49</accession>
<accession>Q68DU2</accession>
<accession>Q6AZ93</accession>
<accession>Q6PK88</accession>
<accession>Q86T40</accession>
<accession>Q86TB2</accession>
<accession>Q8N3W0</accession>
<accession>Q8TAY9</accession>
<accession>Q9HCP2</accession>
<accession>Q9HCP3</accession>
<accession>Q9HCP4</accession>
<accession>Q9HCP5</accession>
<keyword id="KW-0025">Alternative splicing</keyword>
<keyword id="KW-0160">Chromosomal rearrangement</keyword>
<keyword id="KW-0175">Coiled coil</keyword>
<keyword id="KW-0963">Cytoplasm</keyword>
<keyword id="KW-0206">Cytoskeleton</keyword>
<keyword id="KW-0333">Golgi apparatus</keyword>
<keyword id="KW-0597">Phosphoprotein</keyword>
<keyword id="KW-1267">Proteomics identification</keyword>
<keyword id="KW-1185">Reference proteome</keyword>
<proteinExistence type="evidence at protein level"/>
<sequence length="2346" mass="265103">MSNGYRTLSQHLNDLKKENFSLKLRIYFLEERMQQKYEASREDIYKRNIELKVEVESLKRELQDKKQHLDKTWADVENLNSQNEAELRRQFEERQQETEHVYELLENKIQLLQEESRLAKNEAARMAALVEAEKECNLELSEKLKGVTKNWEDVPGDQVKPDQYTEALAQRDKRIEELNQSLAAQERLVEQLSREKQQLLHLLEEPTSMEVQPMTEELLKQQKLNSHETTITQQSVSDSHLAELQEKIQQTEATNKILQEKLNEMSYELKCAQESSQKQDGTIQNLKETLKSRERETEELYQVIEGQNDTMAKLREMLHQSQLGQLHSSEGTSPAQQQVALLDLQSALFCSQLEIQKLQRVVRQKERQLADAKQCVQFVEAAAHESEQQKEASWKHNQELRKALQQLQEELQNKSQQLRAWEAEKYNEIRTQEQNIQHLNHSLSHKEQLLQEFRELLQYRDNSDKTLEANEMLLEKLRQRIHDKAVALERAIDEKFSALEEKEKELRQLRLAVRERDHDLERLRDVLSSNEATMQSMESLLRAKGLEVEQLSTTCQNLQWLKEEMETKFSRWQKEQESIIQQLQTSLHDRNKEVEDLSATLLCKLGPGQSEIAEELCQRLQRKERMLQDLLSDRNKQVLEHEMEIQGLLQSVSTREQESQAAAEKLVQALMERNSELQALRQYLGGRDSLMSQAPISNQQAEVTPTGRLGKQTDQGSMQIPSRDDSTSLTAKEDVSIPRSTLGDLDTVAGLEKELSNAKEELELMAKKERESQMELSALQSMMAVQEEELQVQAADMESLTRNIQIKEDLIKDLQMQLVDPEDIPAMERLTQEVLLLREKVASVESQGQEISGNRRQQLLLMLEGLVDERSRLNEALQAERQLYSSLVKFHAHPESSERDRTLQVELEGAQVLRSRLEEVLGRSLERLNRLETLAAIGGAAAGDDTEDTSTEFTDSIEEEAAHHSHQQLVKVALEKSLATVETQNPSFSPPSPMGGDSNRCLQEEMLHLRAEFHQHLEEKRKAEEELKELKAQIEEAGFSSVSHIRNTMLSLCLENAELKEQMGEAMSDGWEIEEDKEKGEVMVETVVTKEGLSESSLQAEFRKLQGKLKNAHNIINLLKEQLVLSSKEGNSKLTPELLVHLTSTIERINTELVGSPGKHQHQEEGNVTVRPFPRPQSLDLGATFTVDAHQLDNQSQPRDPGPQSAFSLPGSTQHLRSQLSQCKQRYQDLQEKLLLSEATVFAQANELEKYRVMLTGESLVKQDSKQIQVDLQDLGYETCGRSENEAEREETTSPECEEHNSLKEMVLMEGLCSEQGRRGSTLASSSERKPLENQLGKQEEFRVYGKSENILVLRKDIKDLKAQLQNANKVIQNLKSRVRSLSVTSDYSSSLERPRKLRAVGTLEGSSPHSVPDEDEGWLSDGTGAFYSPGLQAKKDLESLIQRVSQLEAQLPKNGLEEKLAEELRSASWPGKYDSLIQDQARELSYLRQKIREGRGICYLITRHAKDTVKSFEDLLRSNDIDYYLGQSFREQLAQGSQLTERLTSKLSTKDHKSEKDQAGLEPLALRLSRELQEKEKVIEVLQAKLDARSLTPSSSHALSDSHRSPSSTSFLSDELEACSDMDIVSEYTHYEEKKASPSHSDSIHHSSHSAVLSSKPSSTSASQGAKAESNSNPISLPTPQNTPKEANQAHSGFHFHSIPKLASLPQAPLPSAPSSFLPFSPTGPLLLGCCETPVVSLAEAQQELQMLQKQLGESASTVPPASTATLLSNDLEADSSYYLNSAQPHSPPRGTIELGRILEPGYLGSSGKWDVMRPQKGSVSGDLSSGSSVYQLNSKPTGADLLEEHLGEIRNLRQRLEESICINDRLREQLEHRLTSTARGRGSTSNFYSQGLESIPQLCNENRVLREDNRRLQAQLSHVSREHSQETESLREALLSSRSHLQELEKELEHQKVERQQLLEDLREKQQEVLHFREERLSLQENDSRLQHKLVLLQQQCEEKQQLFESLQSELQIYEALYGNSKKGLKAYSLDACHQIPLSSDLSHLVAEVRALRGQLEQSIQGNNCLRLQLQQQLESGAGKASLSPSSINQNFPASTDPGNKQLLLQDSAVSPPVRDVGMNSPALVFPSSASSTPGSETPIINRANGLGLDTSPVMKTPPKLEGDATDGSFANKHGRHVIGHIDDYSALRQQIAEGKLLVKKIVSLVRSACSFPGLEAQGTEVLGSKGIHELRSSTSALHHALEESASLLTMFWRAALPSTHIPVLPGKVGESTERELLELRTKVSKQERLLQSTTEHLKNANQQKESMEQFIVSQLTRTHDVLKKARTNLEVKSLRALPCTPAL</sequence>
<feature type="chain" id="PRO_0000307690" description="Myomegalin">
    <location>
        <begin position="1"/>
        <end position="2346"/>
    </location>
</feature>
<feature type="domain" description="Olduvai" evidence="3">
    <location>
        <begin position="1551"/>
        <end position="1642"/>
    </location>
</feature>
<feature type="region of interest" description="Disordered" evidence="4">
    <location>
        <begin position="698"/>
        <end position="732"/>
    </location>
</feature>
<feature type="region of interest" description="Disordered" evidence="4">
    <location>
        <begin position="1193"/>
        <end position="1214"/>
    </location>
</feature>
<feature type="region of interest" description="Disordered" evidence="4">
    <location>
        <begin position="1591"/>
        <end position="1614"/>
    </location>
</feature>
<feature type="region of interest" description="Disordered" evidence="4">
    <location>
        <begin position="1633"/>
        <end position="1690"/>
    </location>
</feature>
<feature type="region of interest" description="Disordered" evidence="4">
    <location>
        <begin position="2081"/>
        <end position="2103"/>
    </location>
</feature>
<feature type="region of interest" description="Disordered" evidence="4">
    <location>
        <begin position="2127"/>
        <end position="2156"/>
    </location>
</feature>
<feature type="coiled-coil region" evidence="2">
    <location>
        <begin position="41"/>
        <end position="132"/>
    </location>
</feature>
<feature type="coiled-coil region" evidence="2">
    <location>
        <begin position="162"/>
        <end position="205"/>
    </location>
</feature>
<feature type="coiled-coil region" evidence="2">
    <location>
        <begin position="238"/>
        <end position="318"/>
    </location>
</feature>
<feature type="coiled-coil region" evidence="2">
    <location>
        <begin position="350"/>
        <end position="684"/>
    </location>
</feature>
<feature type="coiled-coil region" evidence="2">
    <location>
        <begin position="743"/>
        <end position="936"/>
    </location>
</feature>
<feature type="coiled-coil region" evidence="2">
    <location>
        <begin position="1002"/>
        <end position="1043"/>
    </location>
</feature>
<feature type="coiled-coil region" evidence="2">
    <location>
        <begin position="1096"/>
        <end position="1124"/>
    </location>
</feature>
<feature type="coiled-coil region" evidence="2">
    <location>
        <begin position="1212"/>
        <end position="1240"/>
    </location>
</feature>
<feature type="coiled-coil region" evidence="2">
    <location>
        <begin position="1346"/>
        <end position="1385"/>
    </location>
</feature>
<feature type="coiled-coil region" evidence="2">
    <location>
        <begin position="1431"/>
        <end position="1455"/>
    </location>
</feature>
<feature type="coiled-coil region" evidence="2">
    <location>
        <begin position="1736"/>
        <end position="1760"/>
    </location>
</feature>
<feature type="coiled-coil region" evidence="2">
    <location>
        <begin position="1840"/>
        <end position="2077"/>
    </location>
</feature>
<feature type="coiled-coil region" evidence="2">
    <location>
        <begin position="2273"/>
        <end position="2312"/>
    </location>
</feature>
<feature type="compositionally biased region" description="Basic and acidic residues" evidence="4">
    <location>
        <begin position="722"/>
        <end position="732"/>
    </location>
</feature>
<feature type="compositionally biased region" description="Polar residues" evidence="4">
    <location>
        <begin position="1205"/>
        <end position="1214"/>
    </location>
</feature>
<feature type="compositionally biased region" description="Low complexity" evidence="4">
    <location>
        <begin position="1591"/>
        <end position="1600"/>
    </location>
</feature>
<feature type="compositionally biased region" description="Polar residues" evidence="4">
    <location>
        <begin position="1652"/>
        <end position="1690"/>
    </location>
</feature>
<feature type="compositionally biased region" description="Polar residues" evidence="4">
    <location>
        <begin position="2085"/>
        <end position="2103"/>
    </location>
</feature>
<feature type="site" description="Breakpoint for insertion to form PDE4DIP-PDGFRB fusion protein">
    <location>
        <begin position="742"/>
        <end position="743"/>
    </location>
</feature>
<feature type="modified residue" description="Phosphothreonine" evidence="24">
    <location>
        <position position="704"/>
    </location>
</feature>
<feature type="splice variant" id="VSP_028772" description="In isoform 2 and isoform 13." evidence="16 22">
    <original>MSNGYRTLSQHLNDLKKENFSLKLRIYFLEERMQQKYEASREDIYKRNIELKVEVESLKRELQDKKQHLDKTWADVENLNSQNEAELRRQFEERQQETEHVYELLENKIQLLQEESRLAKNEAARMAALVEAEKECNLELSEKLKGVTKNWEDVPGDQVKPDQYTEALAQRDKRIEELNQSLAAQERLVEQLSREKQQLLHLLEEPTSME</original>
    <variation>MKEICRICARELCGNQRRWIFHTASKLNLQVLLSHVLGKDVPRDGKAEFACSKCAFMLDRIYRFDTVIARIEALSIERLQKLLLEKDRLKFCIASMYRKNNDDSGAEIKAGNGTVDMSVLPDARYSALLQEDFAYSGFECWVENEDQIQEPHSCHGSEGPGNRPRRCRGCAALRVADSDYEAICKVPRKVARSISCGPSSRWSTSICTEEPALSEVGPPDLASTKVPPDGESMEEETPGSSVESLDASVQASPPQQKDEETERSAKELGKCDCCSDDQAPQHGCNHKLELALSMIKGLDYKPIQSPRGSRLPIPVKSSLPGAKPGPSMTDGVSSGFLNRSLKPLYKTPVSYPLELSDLQELWDDLCEDYLPLR</variation>
    <location>
        <begin position="1"/>
        <end position="210"/>
    </location>
</feature>
<feature type="splice variant" id="VSP_028773" description="In isoform 3 and isoform 12." evidence="14 22">
    <original>MSNGYRTLSQ</original>
    <variation>MEQTWTRDYFAEDDGEMVPRTSHTAAFLSDTKDRGPPVQSQIWRSGEKVPFVQTYSLRAFEKPPQVQTQALRDFEK</variation>
    <location>
        <begin position="1"/>
        <end position="10"/>
    </location>
</feature>
<feature type="splice variant" id="VSP_028774" description="In isoform 8 and isoform 9." evidence="16">
    <original>MSNGYRTLSQ</original>
    <variation>MKGTDSGSCCRRRCDFGCCCRASRRAHYTPYRSGDATRTPQSPRQTPSRERRRPEPAGSWAAAAEEEEAAAAATPWMRDYFAEDDGEMVPRTSHTAAFLSDTKDRGPPVQSQIWRSGEKVPFVQTYSLRAFEKPPQVQTQALRDFEK</variation>
    <location>
        <begin position="1"/>
        <end position="10"/>
    </location>
</feature>
<feature type="splice variant" id="VSP_028775" description="In isoform 8 and isoform 11." evidence="14 16">
    <location>
        <begin position="174"/>
        <end position="2346"/>
    </location>
</feature>
<feature type="splice variant" id="VSP_028776" description="In isoform 9, isoform 10 and isoform 12." evidence="14 16">
    <original>R</original>
    <variation>I</variation>
    <location>
        <position position="174"/>
    </location>
</feature>
<feature type="splice variant" id="VSP_028777" description="In isoform 9, isoform 10 and isoform 12." evidence="14 16">
    <location>
        <begin position="175"/>
        <end position="2346"/>
    </location>
</feature>
<feature type="splice variant" id="VSP_059333" description="In isoform 13.">
    <original>AAAGDDTEDTSTEF</original>
    <variation>GELESVRIHHKHAY</variation>
    <location>
        <begin position="940"/>
        <end position="953"/>
    </location>
</feature>
<feature type="splice variant" id="VSP_059334" description="In isoform 13.">
    <location>
        <begin position="954"/>
        <end position="2346"/>
    </location>
</feature>
<feature type="splice variant" id="VSP_028778" description="In isoform 7." evidence="17">
    <original>QLVKVALEKSLATVETQNPSF</original>
    <variation>QVSQCQGLGLPGWTAHSPSEV</variation>
    <location>
        <begin position="968"/>
        <end position="988"/>
    </location>
</feature>
<feature type="splice variant" id="VSP_028779" description="In isoform 2 and isoform 6." evidence="16 17 22">
    <location>
        <begin position="970"/>
        <end position="2346"/>
    </location>
</feature>
<feature type="splice variant" id="VSP_028780" description="In isoform 7." evidence="17">
    <location>
        <begin position="989"/>
        <end position="2346"/>
    </location>
</feature>
<feature type="splice variant" id="VSP_028781" description="In isoform 3." evidence="22">
    <location>
        <begin position="1082"/>
        <end position="1191"/>
    </location>
</feature>
<feature type="splice variant" id="VSP_028782" description="In isoform 3." evidence="22">
    <location>
        <begin position="1695"/>
        <end position="1756"/>
    </location>
</feature>
<feature type="splice variant" id="VSP_028783" description="In isoform 4." evidence="15">
    <original>VKSLRALPCTPAL</original>
    <variation>EPCKKRSHQKSLKQQERWACPPFVQLPIC</variation>
    <location>
        <begin position="2334"/>
        <end position="2346"/>
    </location>
</feature>
<feature type="sequence variant" id="VAR_036627" description="In dbSNP:rs3010980.">
    <original>N</original>
    <variation>S</variation>
    <location>
        <position position="13"/>
    </location>
</feature>
<feature type="sequence variant" id="VAR_036628" description="In dbSNP:rs1664022.">
    <original>R</original>
    <variation>L</variation>
    <location>
        <position position="25"/>
    </location>
</feature>
<feature type="sequence variant" id="VAR_036629" description="In dbSNP:rs573724." evidence="5 7">
    <original>I</original>
    <variation>T</variation>
    <location>
        <position position="49"/>
    </location>
</feature>
<feature type="sequence variant" id="VAR_056951" description="In dbSNP:rs1747958.">
    <original>K</original>
    <variation>E</variation>
    <location>
        <position position="143"/>
    </location>
</feature>
<feature type="sequence variant" id="VAR_056952" description="In dbSNP:rs3010980.">
    <original>N</original>
    <variation>S</variation>
    <location>
        <position position="150"/>
    </location>
</feature>
<feature type="sequence variant" id="VAR_036630" description="In dbSNP:rs2590120.">
    <original>A</original>
    <variation>T</variation>
    <location>
        <position position="167"/>
    </location>
</feature>
<feature type="sequence variant" id="VAR_051204" description="In dbSNP:rs3121544.">
    <original>R</original>
    <variation>K</variation>
    <location>
        <position position="171"/>
    </location>
</feature>
<feature type="sequence variant" id="VAR_051205" description="In dbSNP:rs1324366.">
    <original>E</original>
    <variation>A</variation>
    <location>
        <position position="391"/>
    </location>
</feature>
<feature type="sequence variant" id="VAR_051206" description="In dbSNP:rs1061308.">
    <original>E</original>
    <variation>V</variation>
    <location>
        <position position="410"/>
    </location>
</feature>
<feature type="sequence variant" id="VAR_051207" description="In dbSNP:rs1698681.">
    <original>H</original>
    <variation>R</variation>
    <location>
        <position position="482"/>
    </location>
</feature>
<feature type="sequence variant" id="VAR_051208" description="In dbSNP:rs1629011.">
    <original>R</original>
    <variation>H</variation>
    <location>
        <position position="681"/>
    </location>
</feature>
<feature type="sequence variant" id="VAR_051209" description="In dbSNP:rs1628172." evidence="8 9">
    <original>R</original>
    <variation>C</variation>
    <location>
        <position position="708"/>
    </location>
</feature>
<feature type="sequence variant" id="VAR_051210" description="In dbSNP:rs1698624." evidence="9">
    <original>F</original>
    <variation>I</variation>
    <location>
        <position position="1013"/>
    </location>
</feature>
<feature type="sequence variant" id="VAR_051211" description="In dbSNP:rs1698647." evidence="9">
    <original>A</original>
    <variation>T</variation>
    <location>
        <position position="1066"/>
    </location>
</feature>
<feature type="sequence variant" id="VAR_051212" description="In dbSNP:rs1747958." evidence="9">
    <original>K</original>
    <variation>E</variation>
    <location>
        <position position="1359"/>
    </location>
</feature>
<feature type="sequence variant" id="VAR_080232" description="In dbSNP:rs2798901.">
    <original>R</original>
    <variation>W</variation>
    <location>
        <position position="1396"/>
    </location>
</feature>
<feature type="sequence variant" id="VAR_051213" description="In dbSNP:rs1778159." evidence="9">
    <original>V</original>
    <variation>E</variation>
    <location>
        <position position="1736"/>
    </location>
</feature>
<feature type="sequence variant" id="VAR_051214" description="In dbSNP:rs1698605." evidence="9">
    <original>A</original>
    <variation>S</variation>
    <location>
        <position position="1742"/>
    </location>
</feature>
<feature type="sequence conflict" description="In Ref. 5; CAD89923." evidence="23" ref="5">
    <original>M</original>
    <variation>T</variation>
    <location>
        <position position="33"/>
    </location>
</feature>
<feature type="sequence conflict" description="In Ref. 1; BAB17761/BAB17762." evidence="23" ref="1">
    <original>T</original>
    <variation>M</variation>
    <location>
        <position position="98"/>
    </location>
</feature>
<feature type="sequence conflict" description="In Ref. 1; BAB17759/BAB17760/BAB17761/BAB17762 and 7; AAH25406/AAI10295." evidence="23" ref="1 7">
    <original>I</original>
    <variation>M</variation>
    <location>
        <position position="109"/>
    </location>
</feature>
<feature type="sequence conflict" description="In Ref. 5; CAD91152." evidence="23" ref="5">
    <original>R</original>
    <variation>Q</variation>
    <location>
        <position position="401"/>
    </location>
</feature>
<feature type="sequence conflict" description="In Ref. 5; CAD91152." evidence="23" ref="5">
    <original>M</original>
    <variation>V</variation>
    <location>
        <position position="643"/>
    </location>
</feature>
<feature type="sequence conflict" description="In Ref. 5; CAD91152." evidence="23" ref="5">
    <original>L</original>
    <variation>P</variation>
    <location>
        <position position="776"/>
    </location>
</feature>
<feature type="sequence conflict" description="In Ref. 5; CAD38529 and 7; AAI32718." evidence="23" ref="5 7">
    <original>M</original>
    <variation>I</variation>
    <location>
        <position position="783"/>
    </location>
</feature>
<feature type="sequence conflict" description="In Ref. 5; CAD91152." evidence="23" ref="5">
    <original>L</original>
    <variation>P</variation>
    <location>
        <position position="830"/>
    </location>
</feature>
<feature type="sequence conflict" description="In Ref. 5; CAD38529." evidence="23" ref="5">
    <original>L</original>
    <variation>P</variation>
    <location>
        <position position="863"/>
    </location>
</feature>
<feature type="sequence conflict" description="In Ref. 5; CAH18128." evidence="23" ref="5">
    <original>K</original>
    <variation>E</variation>
    <location>
        <position position="1266"/>
    </location>
</feature>
<feature type="sequence conflict" description="In Ref. 5; CAD91152." evidence="23" ref="5">
    <original>E</original>
    <variation>G</variation>
    <location>
        <position position="1286"/>
    </location>
</feature>
<feature type="sequence conflict" description="In Ref. 5; CAD91152." evidence="23" ref="5">
    <original>K</original>
    <variation>R</variation>
    <location>
        <position position="1356"/>
    </location>
</feature>
<feature type="sequence conflict" description="In Ref. 5; CAD91152." evidence="23" ref="5">
    <original>K</original>
    <variation>E</variation>
    <location>
        <position position="1397"/>
    </location>
</feature>
<feature type="sequence conflict" description="In Ref. 5; CAH18128." evidence="23" ref="5">
    <original>K</original>
    <variation>E</variation>
    <location>
        <position position="1454"/>
    </location>
</feature>
<feature type="sequence conflict" description="In Ref. 5; CAH18128." evidence="23" ref="5">
    <original>R</original>
    <variation>Q</variation>
    <location>
        <position position="1504"/>
    </location>
</feature>
<feature type="sequence conflict" description="In Ref. 5; CAH18128." evidence="23" ref="5">
    <original>H</original>
    <variation>R</variation>
    <location>
        <position position="1598"/>
    </location>
</feature>
<feature type="sequence conflict" description="In Ref. 5; CAH18128." evidence="23" ref="5">
    <original>T</original>
    <variation>P</variation>
    <location>
        <position position="1610"/>
    </location>
</feature>
<feature type="sequence conflict" description="In Ref. 5; CAH18128." evidence="23" ref="5">
    <original>L</original>
    <variation>P</variation>
    <location>
        <position position="1727"/>
    </location>
</feature>
<feature type="sequence conflict" description="In Ref. 5; CAH18128." evidence="23" ref="5">
    <original>A</original>
    <variation>T</variation>
    <location>
        <position position="1757"/>
    </location>
</feature>
<feature type="sequence conflict" description="In Ref. 5; CAH18128." evidence="23" ref="5">
    <original>R</original>
    <variation>C</variation>
    <location>
        <position position="1867"/>
    </location>
</feature>
<feature type="sequence conflict" description="In Ref. 5; CAH18128." evidence="23" ref="5">
    <original>D</original>
    <variation>E</variation>
    <location>
        <position position="1910"/>
    </location>
</feature>
<feature type="sequence conflict" description="In Ref. 5; CAH18128." evidence="23" ref="5">
    <original>E</original>
    <variation>G</variation>
    <location>
        <position position="2001"/>
    </location>
</feature>
<feature type="sequence conflict" description="In Ref. 5; CAH18128." evidence="23" ref="5">
    <location>
        <position position="2088"/>
    </location>
</feature>
<feature type="sequence conflict" description="In Ref. 5; CAH18128." evidence="23" ref="5">
    <original>R</original>
    <variation>Q</variation>
    <location>
        <position position="2291"/>
    </location>
</feature>
<feature type="sequence conflict" description="In Ref. 5; CAH18128." evidence="23" ref="5">
    <original>Q</original>
    <variation>R</variation>
    <location>
        <position position="2317"/>
    </location>
</feature>
<feature type="modified residue" description="Phosphoserine" evidence="25">
    <location sequence="Q5VU43-2">
        <position position="252"/>
    </location>
</feature>
<feature type="modified residue" description="Phosphoserine" evidence="25">
    <location sequence="Q5VU43-13">
        <position position="252"/>
    </location>
</feature>
<evidence type="ECO:0000250" key="1">
    <source>
        <dbReference type="UniProtKB" id="Q9WUJ3"/>
    </source>
</evidence>
<evidence type="ECO:0000255" key="2"/>
<evidence type="ECO:0000255" key="3">
    <source>
        <dbReference type="PROSITE-ProRule" id="PRU00647"/>
    </source>
</evidence>
<evidence type="ECO:0000256" key="4">
    <source>
        <dbReference type="SAM" id="MobiDB-lite"/>
    </source>
</evidence>
<evidence type="ECO:0000269" key="5">
    <source>
    </source>
</evidence>
<evidence type="ECO:0000269" key="6">
    <source>
    </source>
</evidence>
<evidence type="ECO:0000269" key="7">
    <source>
    </source>
</evidence>
<evidence type="ECO:0000269" key="8">
    <source>
    </source>
</evidence>
<evidence type="ECO:0000269" key="9">
    <source>
    </source>
</evidence>
<evidence type="ECO:0000269" key="10">
    <source>
    </source>
</evidence>
<evidence type="ECO:0000269" key="11">
    <source>
    </source>
</evidence>
<evidence type="ECO:0000269" key="12">
    <source>
    </source>
</evidence>
<evidence type="ECO:0000269" key="13">
    <source>
    </source>
</evidence>
<evidence type="ECO:0000303" key="14">
    <source>
    </source>
</evidence>
<evidence type="ECO:0000303" key="15">
    <source>
    </source>
</evidence>
<evidence type="ECO:0000303" key="16">
    <source>
    </source>
</evidence>
<evidence type="ECO:0000303" key="17">
    <source>
    </source>
</evidence>
<evidence type="ECO:0000303" key="18">
    <source>
    </source>
</evidence>
<evidence type="ECO:0000303" key="19">
    <source>
    </source>
</evidence>
<evidence type="ECO:0000303" key="20">
    <source>
    </source>
</evidence>
<evidence type="ECO:0000303" key="21">
    <source>
    </source>
</evidence>
<evidence type="ECO:0000303" key="22">
    <source>
    </source>
</evidence>
<evidence type="ECO:0000305" key="23"/>
<evidence type="ECO:0007744" key="24">
    <source>
    </source>
</evidence>
<evidence type="ECO:0007744" key="25">
    <source>
    </source>
</evidence>